<keyword id="KW-0002">3D-structure</keyword>
<keyword id="KW-0007">Acetylation</keyword>
<keyword id="KW-0010">Activator</keyword>
<keyword id="KW-0025">Alternative splicing</keyword>
<keyword id="KW-0903">Direct protein sequencing</keyword>
<keyword id="KW-1017">Isopeptide bond</keyword>
<keyword id="KW-0488">Methylation</keyword>
<keyword id="KW-0539">Nucleus</keyword>
<keyword id="KW-0597">Phosphoprotein</keyword>
<keyword id="KW-1267">Proteomics identification</keyword>
<keyword id="KW-1185">Reference proteome</keyword>
<keyword id="KW-0677">Repeat</keyword>
<keyword id="KW-0678">Repressor</keyword>
<keyword id="KW-0804">Transcription</keyword>
<keyword id="KW-0805">Transcription regulation</keyword>
<keyword id="KW-0832">Ubl conjugation</keyword>
<reference key="1">
    <citation type="journal article" date="1996" name="Genomics">
        <title>Isolation, sequencing, and mapping of the human homologue of the yeast transcription factor, SPT5.</title>
        <authorList>
            <person name="Chiang P.-W."/>
            <person name="Fogel E."/>
            <person name="Jackson C.L."/>
            <person name="Lieuallen K."/>
            <person name="Lennon G."/>
            <person name="Qu X."/>
            <person name="Wang S.-Q."/>
            <person name="Kurnit D.M."/>
        </authorList>
    </citation>
    <scope>NUCLEOTIDE SEQUENCE [MRNA] (ISOFORM 1)</scope>
    <scope>TISSUE SPECIFICITY</scope>
</reference>
<reference key="2">
    <citation type="journal article" date="1997" name="FEBS Lett.">
        <title>Human Supt5h protein, a putative modulator of chromatin structure, is reversibly phosphorylated in mitosis.</title>
        <authorList>
            <person name="Stachora A.A."/>
            <person name="Schaefer R.E."/>
            <person name="Pohlmeier M."/>
            <person name="Maier G."/>
            <person name="Ponstingl H."/>
        </authorList>
    </citation>
    <scope>NUCLEOTIDE SEQUENCE [MRNA] (ISOFORM 1)</scope>
    <scope>PROTEIN SEQUENCE OF 116-152; 288-319; 461-471; 529-542; 580-587; 746-761; 795-809; 841-885; 888-922 AND 1068-1087</scope>
    <scope>DOMAINS CTR1 AND CTR2</scope>
    <scope>PHOSPHORYLATION</scope>
</reference>
<reference key="3">
    <citation type="journal article" date="1998" name="Genes Dev.">
        <title>DSIF, a novel transcription elongation factor that regulates RNA polymerase II processivity, is composed of human Spt4 and Spt5 homologs.</title>
        <authorList>
            <person name="Wada T."/>
            <person name="Takagi T."/>
            <person name="Yamaguchi Y."/>
            <person name="Ferdous A."/>
            <person name="Imai T."/>
            <person name="Hirose S."/>
            <person name="Sugimoto S."/>
            <person name="Yano K."/>
            <person name="Hartzog G.A."/>
            <person name="Winston F."/>
            <person name="Buratowski S."/>
            <person name="Handa H."/>
        </authorList>
    </citation>
    <scope>NUCLEOTIDE SEQUENCE [MRNA] (ISOFORM 1)</scope>
    <scope>PROTEIN SEQUENCE OF 277-282; 324-328; 459-470 AND 580-597</scope>
    <scope>FUNCTION</scope>
    <scope>INTERACTION WITH SUPT4H1 AND RNA POLYMERASE II</scope>
</reference>
<reference key="4">
    <citation type="journal article" date="1998" name="J. Mol. Biol.">
        <title>Role of the human homolog of the yeast transcription factor SPT5 in HIV-1 Tat-activation.</title>
        <authorList>
            <person name="Wu-Baer F."/>
            <person name="Lane W.S."/>
            <person name="Gaynor R.B."/>
        </authorList>
    </citation>
    <scope>NUCLEOTIDE SEQUENCE [MRNA] (ISOFORM 1)</scope>
    <scope>PROTEIN SEQUENCE OF 199-213; 247-258 AND 799-811</scope>
    <scope>FUNCTION</scope>
</reference>
<reference key="5">
    <citation type="submission" date="2005-03" db="EMBL/GenBank/DDBJ databases">
        <authorList>
            <person name="Totoki Y."/>
            <person name="Toyoda A."/>
            <person name="Takeda T."/>
            <person name="Sakaki Y."/>
            <person name="Tanaka A."/>
            <person name="Yokoyama S."/>
            <person name="Ohara O."/>
            <person name="Nagase T."/>
            <person name="Kikuno R.F."/>
        </authorList>
    </citation>
    <scope>NUCLEOTIDE SEQUENCE [LARGE SCALE MRNA] (ISOFORM 2)</scope>
    <source>
        <tissue>Brain</tissue>
    </source>
</reference>
<reference key="6">
    <citation type="journal article" date="2004" name="Genome Res.">
        <title>The status, quality, and expansion of the NIH full-length cDNA project: the Mammalian Gene Collection (MGC).</title>
        <authorList>
            <consortium name="The MGC Project Team"/>
        </authorList>
    </citation>
    <scope>NUCLEOTIDE SEQUENCE [LARGE SCALE MRNA] (ISOFORM 1)</scope>
    <source>
        <tissue>Muscle</tissue>
    </source>
</reference>
<reference key="7">
    <citation type="journal article" date="1998" name="EMBO J.">
        <title>Evidence that P-TEFb alleviates the negative effect of DSIF on RNA polymerase II-dependent transcription in vitro.</title>
        <authorList>
            <person name="Wada T."/>
            <person name="Takagi T."/>
            <person name="Yamaguchi Y."/>
            <person name="Watanabe D."/>
            <person name="Handa H."/>
        </authorList>
    </citation>
    <scope>FUNCTION</scope>
    <scope>INTERACTION WITH RNA POLYMERASE II</scope>
</reference>
<reference key="8">
    <citation type="journal article" date="1999" name="Cell">
        <title>NELF, a multisubunit complex containing RD, cooperates with DSIF to repress RNA polymerase II elongation.</title>
        <authorList>
            <person name="Yamaguchi Y."/>
            <person name="Takagi T."/>
            <person name="Wada T."/>
            <person name="Yano K."/>
            <person name="Furuya A."/>
            <person name="Sugimoto S."/>
            <person name="Hasegawa J."/>
            <person name="Handa H."/>
        </authorList>
    </citation>
    <scope>FUNCTION</scope>
    <scope>INTERACTION WITH THE NELF COMPLEX</scope>
</reference>
<reference key="9">
    <citation type="journal article" date="1999" name="EMBO J.">
        <title>A novel RNA polymerase II-containing complex potentiates Tat-enhanced HIV-1 transcription.</title>
        <authorList>
            <person name="Parada C.A."/>
            <person name="Roeder R.G."/>
        </authorList>
    </citation>
    <scope>FUNCTION</scope>
    <scope>IDENTIFICATION IN A COMPLEX WITH NCL; CCNT1; RNA POL II; HTATSF1 AND CDK9</scope>
</reference>
<reference key="10">
    <citation type="journal article" date="1999" name="Genes Dev.">
        <title>Transcription elongation factor hSPT5 stimulates mRNA capping.</title>
        <authorList>
            <person name="Wen Y."/>
            <person name="Shatkin A.J."/>
        </authorList>
    </citation>
    <scope>FUNCTION</scope>
    <scope>INTERACTION WITH RNGTT</scope>
</reference>
<reference key="11">
    <citation type="journal article" date="1999" name="J. Biol. Chem.">
        <title>Structure and function of the human transcription elongation factor DSIF.</title>
        <authorList>
            <person name="Yamaguchi Y."/>
            <person name="Wada T."/>
            <person name="Watanabe D."/>
            <person name="Takagi T."/>
            <person name="Hasegawa J."/>
            <person name="Handa H."/>
        </authorList>
    </citation>
    <scope>FUNCTION</scope>
    <scope>INTERACTION WITH RNA POLYMERASE II AND SUPT4H1</scope>
    <scope>SUBCELLULAR LOCATION</scope>
    <scope>TISSUE SPECIFICITY</scope>
</reference>
<reference key="12">
    <citation type="journal article" date="1999" name="Mol. Cell. Biol.">
        <title>Tat-SF1 protein associates with RAP30 and human SPT5 proteins.</title>
        <authorList>
            <person name="Kim J.B."/>
            <person name="Yamaguchi Y."/>
            <person name="Wada T."/>
            <person name="Handa H."/>
            <person name="Sharp P.A."/>
        </authorList>
    </citation>
    <scope>FUNCTION</scope>
    <scope>INTERACTION WITH HTATSF1 AND RNA POLYMERASE II</scope>
</reference>
<reference key="13">
    <citation type="journal article" date="2000" name="Mol. Cell">
        <title>FACT relieves DSIF/NELF-mediated inhibition of transcriptional elongation and reveals functional differences between P-TEFb and TFIIH.</title>
        <authorList>
            <person name="Wada T."/>
            <person name="Orphanides G."/>
            <person name="Hasegawa J."/>
            <person name="Kim D.-K."/>
            <person name="Shima D."/>
            <person name="Yamaguchi Y."/>
            <person name="Fukuda A."/>
            <person name="Hisatake K."/>
            <person name="Oh S."/>
            <person name="Reinberg D."/>
            <person name="Handa H."/>
        </authorList>
    </citation>
    <scope>FUNCTION</scope>
</reference>
<reference key="14">
    <citation type="journal article" date="2000" name="Mol. Cell. Biol.">
        <title>Domains in the SPT5 protein that modulate its transcriptional regulatory properties.</title>
        <authorList>
            <person name="Ivanov D."/>
            <person name="Kwak Y.T."/>
            <person name="Guo J."/>
            <person name="Gaynor R.B."/>
        </authorList>
    </citation>
    <scope>FUNCTION</scope>
    <scope>INTERACTION WITH RNA POLYMERASE II AND SUPT4H1</scope>
    <scope>PHOSPHORYLATION AT THR-775 AND THR-784</scope>
</reference>
<reference key="15">
    <citation type="journal article" date="2001" name="J. Biol. Chem.">
        <title>Positive transcription elongation factor B phosphorylates hSPT5 and RNA polymerase II carboxyl-terminal domain independently of cyclin-dependent kinase-activating kinase.</title>
        <authorList>
            <person name="Kim J.B."/>
            <person name="Sharp P.A."/>
        </authorList>
    </citation>
    <scope>PHOSPHORYLATION BY CDK9</scope>
</reference>
<reference key="16">
    <citation type="journal article" date="2001" name="J. Biol. Chem.">
        <title>DSIF and NELF interact with RNA polymerase II elongation complex and HIV-1 Tat stimulates P-TEFb-mediated phosphorylation of RNA polymerase II and DSIF during transcription elongation.</title>
        <authorList>
            <person name="Ping Y.-H."/>
            <person name="Rana T.M."/>
        </authorList>
    </citation>
    <scope>FUNCTION</scope>
    <scope>PHOSPHORYLATION BY CDK9</scope>
</reference>
<reference key="17">
    <citation type="journal article" date="2001" name="J. Biol. Chem.">
        <title>A highly purified RNA polymerase II elongation control system.</title>
        <authorList>
            <person name="Renner D.B."/>
            <person name="Yamaguchi Y."/>
            <person name="Wada T."/>
            <person name="Handa H."/>
            <person name="Price D.H."/>
        </authorList>
    </citation>
    <scope>FUNCTION</scope>
</reference>
<reference key="18">
    <citation type="journal article" date="2001" name="J. Mol. Biol.">
        <title>The peptidyl-prolyl isomerase Pin1 interacts with hSpt5 phosphorylated by Cdk9.</title>
        <authorList>
            <person name="Lavoie S.B."/>
            <person name="Albert A.L."/>
            <person name="Handa H."/>
            <person name="Vincent M."/>
            <person name="Bensaude O."/>
        </authorList>
    </citation>
    <scope>INTERACTION WITH PIN1</scope>
    <scope>PHOSPHORYLATION</scope>
</reference>
<reference key="19">
    <citation type="journal article" date="2002" name="Mol. Cell. Biol.">
        <title>Spt5 cooperates with human immunodeficiency virus type 1 Tat by preventing premature RNA release at terminator sequences.</title>
        <authorList>
            <person name="Bourgeois C.F."/>
            <person name="Kim Y.K."/>
            <person name="Churcher M.J."/>
            <person name="West M.J."/>
            <person name="Karn J."/>
        </authorList>
    </citation>
    <scope>FUNCTION</scope>
    <scope>PHOSPHORYLATION BY CDK9</scope>
</reference>
<reference key="20">
    <citation type="journal article" date="2002" name="Mol. Cell. Biol.">
        <title>Evidence that negative elongation factor represses transcription elongation through binding to a DRB sensitivity-inducing factor/RNA polymerase II complex and RNA.</title>
        <authorList>
            <person name="Yamaguchi Y."/>
            <person name="Inukai N."/>
            <person name="Narita T."/>
            <person name="Wada T."/>
            <person name="Handa H."/>
        </authorList>
    </citation>
    <scope>INTERACTION WITH THE NELF COMPLEX</scope>
</reference>
<reference key="21">
    <citation type="journal article" date="2003" name="Genes Cells">
        <title>Structure-function analysis of human Spt4: evidence that hSpt4 and hSpt5 exert their roles in transcriptional elongation as parts of the DSIF complex.</title>
        <authorList>
            <person name="Kim D.-K."/>
            <person name="Inukai N."/>
            <person name="Yamada T."/>
            <person name="Furuya A."/>
            <person name="Sato H."/>
            <person name="Yamaguchi Y."/>
            <person name="Wada T."/>
            <person name="Handa H."/>
        </authorList>
    </citation>
    <scope>FUNCTION</scope>
    <scope>INTERACTION WITH SUPT4H1</scope>
</reference>
<reference key="22">
    <citation type="journal article" date="2003" name="Mol. Cell">
        <title>Methylation of SPT5 regulates its interaction with RNA polymerase II and transcriptional elongation properties.</title>
        <authorList>
            <person name="Kwak Y.T."/>
            <person name="Guo J."/>
            <person name="Prajapati S."/>
            <person name="Park K.-J."/>
            <person name="Surabhi R.M."/>
            <person name="Miller B."/>
            <person name="Gehrig P."/>
            <person name="Gaynor R.B."/>
        </authorList>
    </citation>
    <scope>FUNCTION</scope>
    <scope>INTERACTION WITH CDK9; PRMT1; RNA POLYMERASE II; PRMT5 AND SUPT4H1</scope>
    <scope>METHYLATION AT ARG-681; ARG-696 AND ARG-698</scope>
    <scope>MUTAGENESIS OF ARG-681; ARG-696 AND ARG-698</scope>
</reference>
<reference key="23">
    <citation type="journal article" date="2003" name="Mol. Cell. Biol.">
        <title>Human transcription elongation factor NELF: identification of novel subunits and reconstitution of the functionally active complex.</title>
        <authorList>
            <person name="Narita T."/>
            <person name="Yamaguchi Y."/>
            <person name="Yano K."/>
            <person name="Sugimoto S."/>
            <person name="Chanarat S."/>
            <person name="Wada T."/>
            <person name="Kim D.-K."/>
            <person name="Hasegawa J."/>
            <person name="Omori M."/>
            <person name="Inukai N."/>
            <person name="Endoh M."/>
            <person name="Yamada T."/>
            <person name="Handa H."/>
        </authorList>
    </citation>
    <scope>INTERACTION WITH THE NELF COMPLEX</scope>
</reference>
<reference key="24">
    <citation type="journal article" date="2004" name="Curr. Biol.">
        <title>Locus-specific requirements for Spt5 in transcriptional activation and repression in Drosophila.</title>
        <authorList>
            <person name="Jennings B.H."/>
            <person name="Shah S."/>
            <person name="Yamaguchi Y."/>
            <person name="Seki M."/>
            <person name="Phillips R.G."/>
            <person name="Handa H."/>
            <person name="Ish-Horowicz D."/>
        </authorList>
    </citation>
    <scope>FUNCTION</scope>
    <scope>MUTAGENESIS OF GLY-1002</scope>
</reference>
<reference key="25">
    <citation type="journal article" date="2004" name="J. Virol.">
        <title>Coordination of transcription factor phosphorylation and histone methylation by the P-TEFb kinase during human immunodeficiency virus type 1 transcription.</title>
        <authorList>
            <person name="Zhou M."/>
            <person name="Deng L."/>
            <person name="Lacoste V."/>
            <person name="Park H.U."/>
            <person name="Pumfery A."/>
            <person name="Kashanchi F."/>
            <person name="Brady J.N."/>
            <person name="Kumar A."/>
        </authorList>
    </citation>
    <scope>PHOSPHORYLATION BY CDK9</scope>
</reference>
<reference key="26">
    <citation type="journal article" date="2004" name="Mol. Cell. Biol.">
        <title>Dynamics of human immunodeficiency virus transcription: P-TEFb phosphorylates RD and dissociates negative effectors from the transactivation response element.</title>
        <authorList>
            <person name="Fujinaga K."/>
            <person name="Irwin D."/>
            <person name="Huang Y."/>
            <person name="Taube R."/>
            <person name="Kurosu T."/>
            <person name="Peterlin B.M."/>
        </authorList>
    </citation>
    <scope>FUNCTION</scope>
</reference>
<reference key="27">
    <citation type="journal article" date="2004" name="Mol. Cell. Biol.">
        <title>Human Spt6 stimulates transcription elongation by RNA polymerase II in vitro.</title>
        <authorList>
            <person name="Endoh M."/>
            <person name="Zhu W."/>
            <person name="Hasegawa J."/>
            <person name="Watanabe H."/>
            <person name="Kim D.-K."/>
            <person name="Aida M."/>
            <person name="Inukai N."/>
            <person name="Narita T."/>
            <person name="Yamada T."/>
            <person name="Furuya A."/>
            <person name="Sato H."/>
            <person name="Yamaguchi Y."/>
            <person name="Mandal S.S."/>
            <person name="Reinberg D."/>
            <person name="Wada T."/>
            <person name="Handa H."/>
        </authorList>
    </citation>
    <scope>INTERACTION WITH RNA POLYMERASE II; SUPT4H1 AND SUPT6H</scope>
</reference>
<reference key="28">
    <citation type="journal article" date="2004" name="Proc. Natl. Acad. Sci. U.S.A.">
        <title>Functional interactions of RNA-capping enzyme with factors that positively and negatively regulate promoter escape by RNA polymerase II.</title>
        <authorList>
            <person name="Mandal S.S."/>
            <person name="Chu C."/>
            <person name="Wada T."/>
            <person name="Handa H."/>
            <person name="Shatkin A.J."/>
            <person name="Reinberg D."/>
        </authorList>
    </citation>
    <scope>FUNCTION</scope>
</reference>
<reference key="29">
    <citation type="journal article" date="2005" name="Proc. Natl. Acad. Sci. U.S.A.">
        <title>A negative elongation factor for human RNA polymerase II inhibits the anti-arrest transcript-cleavage factor TFIIS.</title>
        <authorList>
            <person name="Palangat M."/>
            <person name="Renner D.B."/>
            <person name="Price D.H."/>
            <person name="Landick R."/>
        </authorList>
    </citation>
    <scope>FUNCTION</scope>
</reference>
<reference key="30">
    <citation type="journal article" date="2006" name="Cell">
        <title>Global, in vivo, and site-specific phosphorylation dynamics in signaling networks.</title>
        <authorList>
            <person name="Olsen J.V."/>
            <person name="Blagoev B."/>
            <person name="Gnad F."/>
            <person name="Macek B."/>
            <person name="Kumar C."/>
            <person name="Mortensen P."/>
            <person name="Mann M."/>
        </authorList>
    </citation>
    <scope>PHOSPHORYLATION [LARGE SCALE ANALYSIS] AT SER-666</scope>
    <scope>IDENTIFICATION BY MASS SPECTROMETRY [LARGE SCALE ANALYSIS]</scope>
    <source>
        <tissue>Cervix carcinoma</tissue>
    </source>
</reference>
<reference key="31">
    <citation type="journal article" date="2006" name="Mol. Cell">
        <title>P-TEFb-mediated phosphorylation of hSpt5 C-terminal repeats is critical for processive transcription elongation.</title>
        <authorList>
            <person name="Yamada T."/>
            <person name="Yamaguchi Y."/>
            <person name="Inukai N."/>
            <person name="Okamoto S."/>
            <person name="Mura T."/>
            <person name="Handa H."/>
        </authorList>
    </citation>
    <scope>FUNCTION</scope>
    <scope>PHOSPHORYLATION AT THR-775; THR-784; THR-791; THR-799; THR-806 AND THR-814</scope>
    <scope>MUTAGENESIS OF THR-775; THR-784; THR-791; THR-799; THR-806 AND THR-814</scope>
</reference>
<reference key="32">
    <citation type="journal article" date="2006" name="Nat. Struct. Mol. Biol.">
        <title>Dichotomous but stringent substrate selection by the dual-function Cdk7 complex revealed by chemical genetics.</title>
        <authorList>
            <person name="Larochelle S."/>
            <person name="Batliner J."/>
            <person name="Gamble M.J."/>
            <person name="Barboza N.M."/>
            <person name="Kraybill B.C."/>
            <person name="Blethrow J.D."/>
            <person name="Shokat K.M."/>
            <person name="Fisher R.P."/>
        </authorList>
    </citation>
    <scope>PHOSPHORYLATION BY CDK7</scope>
</reference>
<reference key="33">
    <citation type="journal article" date="2007" name="J. Proteome Res.">
        <title>Improved titanium dioxide enrichment of phosphopeptides from HeLa cells and high confident phosphopeptide identification by cross-validation of MS/MS and MS/MS/MS spectra.</title>
        <authorList>
            <person name="Yu L.R."/>
            <person name="Zhu Z."/>
            <person name="Chan K.C."/>
            <person name="Issaq H.J."/>
            <person name="Dimitrov D.S."/>
            <person name="Veenstra T.D."/>
        </authorList>
    </citation>
    <scope>IDENTIFICATION BY MASS SPECTROMETRY [LARGE SCALE ANALYSIS]</scope>
    <source>
        <tissue>Cervix carcinoma</tissue>
    </source>
</reference>
<reference key="34">
    <citation type="journal article" date="2008" name="Proc. Natl. Acad. Sci. U.S.A.">
        <title>A quantitative atlas of mitotic phosphorylation.</title>
        <authorList>
            <person name="Dephoure N."/>
            <person name="Zhou C."/>
            <person name="Villen J."/>
            <person name="Beausoleil S.A."/>
            <person name="Bakalarski C.E."/>
            <person name="Elledge S.J."/>
            <person name="Gygi S.P."/>
        </authorList>
    </citation>
    <scope>PHOSPHORYLATION [LARGE SCALE ANALYSIS] AT SER-666 AND THR-1034</scope>
    <scope>IDENTIFICATION BY MASS SPECTROMETRY [LARGE SCALE ANALYSIS]</scope>
    <source>
        <tissue>Cervix carcinoma</tissue>
    </source>
</reference>
<reference key="35">
    <citation type="journal article" date="2009" name="Anal. Chem.">
        <title>Lys-N and trypsin cover complementary parts of the phosphoproteome in a refined SCX-based approach.</title>
        <authorList>
            <person name="Gauci S."/>
            <person name="Helbig A.O."/>
            <person name="Slijper M."/>
            <person name="Krijgsveld J."/>
            <person name="Heck A.J."/>
            <person name="Mohammed S."/>
        </authorList>
    </citation>
    <scope>IDENTIFICATION BY MASS SPECTROMETRY [LARGE SCALE ANALYSIS]</scope>
</reference>
<reference key="36">
    <citation type="journal article" date="2010" name="Sci. Signal.">
        <title>Quantitative phosphoproteomics reveals widespread full phosphorylation site occupancy during mitosis.</title>
        <authorList>
            <person name="Olsen J.V."/>
            <person name="Vermeulen M."/>
            <person name="Santamaria A."/>
            <person name="Kumar C."/>
            <person name="Miller M.L."/>
            <person name="Jensen L.J."/>
            <person name="Gnad F."/>
            <person name="Cox J."/>
            <person name="Jensen T.S."/>
            <person name="Nigg E.A."/>
            <person name="Brunak S."/>
            <person name="Mann M."/>
        </authorList>
    </citation>
    <scope>PHOSPHORYLATION [LARGE SCALE ANALYSIS] AT SER-666 AND THR-1034</scope>
    <scope>IDENTIFICATION BY MASS SPECTROMETRY [LARGE SCALE ANALYSIS]</scope>
    <source>
        <tissue>Cervix carcinoma</tissue>
    </source>
</reference>
<reference key="37">
    <citation type="journal article" date="2011" name="BMC Syst. Biol.">
        <title>Initial characterization of the human central proteome.</title>
        <authorList>
            <person name="Burkard T.R."/>
            <person name="Planyavsky M."/>
            <person name="Kaupe I."/>
            <person name="Breitwieser F.P."/>
            <person name="Buerckstuemmer T."/>
            <person name="Bennett K.L."/>
            <person name="Superti-Furga G."/>
            <person name="Colinge J."/>
        </authorList>
    </citation>
    <scope>IDENTIFICATION BY MASS SPECTROMETRY [LARGE SCALE ANALYSIS]</scope>
</reference>
<reference key="38">
    <citation type="journal article" date="2013" name="J. Proteome Res.">
        <title>Toward a comprehensive characterization of a human cancer cell phosphoproteome.</title>
        <authorList>
            <person name="Zhou H."/>
            <person name="Di Palma S."/>
            <person name="Preisinger C."/>
            <person name="Peng M."/>
            <person name="Polat A.N."/>
            <person name="Heck A.J."/>
            <person name="Mohammed S."/>
        </authorList>
    </citation>
    <scope>PHOSPHORYLATION [LARGE SCALE ANALYSIS] AT SER-666; SER-686; SER-789; THR-791; SER-804; THR-806 AND THR-1034</scope>
    <scope>IDENTIFICATION BY MASS SPECTROMETRY [LARGE SCALE ANALYSIS]</scope>
    <source>
        <tissue>Cervix carcinoma</tissue>
        <tissue>Erythroleukemia</tissue>
    </source>
</reference>
<reference key="39">
    <citation type="journal article" date="2013" name="Nat. Commun.">
        <title>GANP regulates recruitment of AID to immunoglobulin variable regions by modulating transcription and nucleosome occupancy.</title>
        <authorList>
            <person name="Singh S.K."/>
            <person name="Maeda K."/>
            <person name="Eid M.M."/>
            <person name="Almofty S.A."/>
            <person name="Ono M."/>
            <person name="Pham P."/>
            <person name="Goodman M.F."/>
            <person name="Sakaguchi N."/>
        </authorList>
    </citation>
    <scope>INTERACTION WITH MCM3AP</scope>
</reference>
<reference key="40">
    <citation type="journal article" date="2014" name="J. Proteomics">
        <title>An enzyme assisted RP-RPLC approach for in-depth analysis of human liver phosphoproteome.</title>
        <authorList>
            <person name="Bian Y."/>
            <person name="Song C."/>
            <person name="Cheng K."/>
            <person name="Dong M."/>
            <person name="Wang F."/>
            <person name="Huang J."/>
            <person name="Sun D."/>
            <person name="Wang L."/>
            <person name="Ye M."/>
            <person name="Zou H."/>
        </authorList>
    </citation>
    <scope>IDENTIFICATION BY MASS SPECTROMETRY [LARGE SCALE ANALYSIS]</scope>
    <source>
        <tissue>Liver</tissue>
    </source>
</reference>
<reference key="41">
    <citation type="journal article" date="2014" name="Nat. Struct. Mol. Biol.">
        <title>Uncovering global SUMOylation signaling networks in a site-specific manner.</title>
        <authorList>
            <person name="Hendriks I.A."/>
            <person name="D'Souza R.C."/>
            <person name="Yang B."/>
            <person name="Verlaan-de Vries M."/>
            <person name="Mann M."/>
            <person name="Vertegaal A.C."/>
        </authorList>
    </citation>
    <scope>SUMOYLATION [LARGE SCALE ANALYSIS] AT LYS-143</scope>
    <scope>IDENTIFICATION BY MASS SPECTROMETRY [LARGE SCALE ANALYSIS]</scope>
</reference>
<reference key="42">
    <citation type="journal article" date="2015" name="Mol. Cell. Proteomics">
        <title>System-wide analysis of SUMOylation dynamics in response to replication stress reveals novel small ubiquitin-like modified target proteins and acceptor lysines relevant for genome stability.</title>
        <authorList>
            <person name="Xiao Z."/>
            <person name="Chang J.G."/>
            <person name="Hendriks I.A."/>
            <person name="Sigurdsson J.O."/>
            <person name="Olsen J.V."/>
            <person name="Vertegaal A.C."/>
        </authorList>
    </citation>
    <scope>SUMOYLATION [LARGE SCALE ANALYSIS] AT LYS-143</scope>
    <scope>IDENTIFICATION BY MASS SPECTROMETRY [LARGE SCALE ANALYSIS]</scope>
</reference>
<reference key="43">
    <citation type="journal article" date="2017" name="Nat. Struct. Mol. Biol.">
        <title>Site-specific mapping of the human SUMO proteome reveals co-modification with phosphorylation.</title>
        <authorList>
            <person name="Hendriks I.A."/>
            <person name="Lyon D."/>
            <person name="Young C."/>
            <person name="Jensen L.J."/>
            <person name="Vertegaal A.C."/>
            <person name="Nielsen M.L."/>
        </authorList>
    </citation>
    <scope>SUMOYLATION [LARGE SCALE ANALYSIS] AT LYS-143 AND LYS-1037</scope>
    <scope>IDENTIFICATION BY MASS SPECTROMETRY [LARGE SCALE ANALYSIS]</scope>
</reference>
<reference key="44">
    <citation type="journal article" date="2019" name="Mol. Cell">
        <title>Control of RNA Pol II speed by PNUTS-PP1 and Spt5 dephosphorylation facilitates termination by a 'sitting duck torpedo' mechanism.</title>
        <authorList>
            <person name="Cortazar M.A."/>
            <person name="Sheridan R.M."/>
            <person name="Erickson B."/>
            <person name="Fong N."/>
            <person name="Glover-Cutter K."/>
            <person name="Brannan K."/>
            <person name="Bentley D.L."/>
        </authorList>
    </citation>
    <scope>DEPHOSPHORYLATION BY THE PNUTS-PP1 COMPLEX</scope>
</reference>
<reference key="45">
    <citation type="journal article" date="2021" name="Cell">
        <title>The PP2A-Integrator-CDK9 axis fine-tunes transcription and can be targeted therapeutically in cancer.</title>
        <authorList>
            <person name="Vervoort S.J."/>
            <person name="Welsh S.A."/>
            <person name="Devlin J.R."/>
            <person name="Barbieri E."/>
            <person name="Knight D.A."/>
            <person name="Offley S."/>
            <person name="Bjelosevic S."/>
            <person name="Costacurta M."/>
            <person name="Todorovski I."/>
            <person name="Kearney C.J."/>
            <person name="Sandow J.J."/>
            <person name="Fan Z."/>
            <person name="Blyth B."/>
            <person name="McLeod V."/>
            <person name="Vissers J.H.A."/>
            <person name="Pavic K."/>
            <person name="Martin B.P."/>
            <person name="Gregory G."/>
            <person name="Demosthenous E."/>
            <person name="Zethoven M."/>
            <person name="Kong I.Y."/>
            <person name="Hawkins E.D."/>
            <person name="Hogg S.J."/>
            <person name="Kelly M.J."/>
            <person name="Newbold A."/>
            <person name="Simpson K.J."/>
            <person name="Kauko O."/>
            <person name="Harvey K.F."/>
            <person name="Ohlmeyer M."/>
            <person name="Westermarck J."/>
            <person name="Gray N."/>
            <person name="Gardini A."/>
            <person name="Johnstone R.W."/>
        </authorList>
    </citation>
    <scope>DEPHOSPHORYLATION BY THE INTAC COMPLEX</scope>
</reference>
<reference key="46">
    <citation type="journal article" date="2023" name="Cell">
        <title>Orphan quality control shapes network dynamics and gene expression.</title>
        <authorList>
            <person name="Mark K.G."/>
            <person name="Kolla S."/>
            <person name="Aguirre J.D."/>
            <person name="Garshott D.M."/>
            <person name="Schmitt S."/>
            <person name="Haakonsen D.L."/>
            <person name="Xu C."/>
            <person name="Kater L."/>
            <person name="Kempf G."/>
            <person name="Martinez-Gonzalez B."/>
            <person name="Akopian D."/>
            <person name="See S.K."/>
            <person name="Thomae N.H."/>
            <person name="Rape M."/>
        </authorList>
    </citation>
    <scope>UBIQUITINATION</scope>
</reference>
<reference key="47">
    <citation type="submission" date="2007-07" db="PDB data bank">
        <title>Solution structure of KOW motifs of human transcription elongation factor SPT5.</title>
        <authorList>
            <consortium name="RIKEN structural genomics initiative (RSGI)"/>
        </authorList>
    </citation>
    <scope>STRUCTURE BY NMR OF 420-523 AND 690-757</scope>
</reference>
<reference key="48">
    <citation type="journal article" date="2010" name="Biochem. J.">
        <title>Crystal structure of the human transcription elongation factor DSIF hSpt4 subunit in complex with the hSpt5 dimerization interface.</title>
        <authorList>
            <person name="Wenzel S."/>
            <person name="Martins B.M."/>
            <person name="Rosch P."/>
            <person name="Wohrl B.M."/>
        </authorList>
    </citation>
    <scope>X-RAY CRYSTALLOGRAPHY (1.55 ANGSTROMS) OF 176-273 IN COMPLEX WITH SPT4H1</scope>
</reference>
<reference key="49">
    <citation type="journal article" date="2017" name="Nat. Struct. Mol. Biol.">
        <title>Structure of a transcribing RNA polymerase II-DSIF complex reveals a multidentate DNA-RNA clamp.</title>
        <authorList>
            <person name="Bernecky C."/>
            <person name="Plitzko J.M."/>
            <person name="Cramer P."/>
        </authorList>
    </citation>
    <scope>X-RAY CRYSTALLOGRAPHY (1.10 ANGSTROMS) OF 979-1087 IN COMPLEX WITH DNA-RNA HYBRID</scope>
    <scope>SUBUNIT</scope>
    <scope>MUTAGENESIS OF ARG-246; LEU-247; TYR-249; TRP-250; ASN-251; ARG-577; LYS-578; LYS-579 AND ARG-582</scope>
</reference>
<comment type="function">
    <text evidence="3 4 5 6 7 8 9 10 12 14 17 18 19 21 22 24 26 34 35 36">Component of the DRB sensitivity-inducing factor complex (DSIF complex), which regulates mRNA processing and transcription elongation by RNA polymerase II (PubMed:10075709, PubMed:10199401, PubMed:10421630, PubMed:10757782, PubMed:10912001, PubMed:11112772, PubMed:11553615, PubMed:12653964, PubMed:12718890, PubMed:15136722, PubMed:15380072, PubMed:9450929, PubMed:9857195). DSIF positively regulates mRNA capping by stimulating the mRNA guanylyltransferase activity of RNGTT/CAP1A (PubMed:10075709, PubMed:10421630, PubMed:10757782, PubMed:10912001, PubMed:11112772, PubMed:11553615, PubMed:12653964, PubMed:12718890, PubMed:15136722, PubMed:15380072, PubMed:9450929, PubMed:9857195). DSIF also acts cooperatively with the negative elongation factor complex (NELF complex) to enhance transcriptional pausing at sites proximal to the promoter (PubMed:10075709, PubMed:10199401, PubMed:10757782, PubMed:10912001, PubMed:11112772, PubMed:11553615, PubMed:12653964, PubMed:12718890, PubMed:15136722, PubMed:15380072, PubMed:9450929, PubMed:9857195). Transcriptional pausing may facilitate the assembly of an elongation competent RNA polymerase II complex (PubMed:10075709, PubMed:10199401, PubMed:10421630, PubMed:10757782, PubMed:10912001, PubMed:11112772, PubMed:11553615, PubMed:12653964, PubMed:12718890, PubMed:15136722, PubMed:15380072, PubMed:9450929, PubMed:9857195). DSIF and NELF promote pausing by inhibition of the transcription elongation factor TFIIS/S-II (PubMed:16214896). TFIIS/S-II binds to RNA polymerase II at transcription pause sites and stimulates the weak intrinsic nuclease activity of the enzyme (PubMed:16214896). Cleavage of blocked transcripts by RNA polymerase II promotes the resumption of transcription from the new 3' terminus and may allow repeated attempts at transcription through natural pause sites (PubMed:16214896). Following phosphorylation by CDK9, DSIF can also positively regulate transcriptional elongation (PubMed:16427012). Required for the efficient activation of transcriptional elongation by the HIV-1 nuclear transcriptional activator, Tat (PubMed:10393184, PubMed:10454543, PubMed:11809800, PubMed:9514752). DSIF acts to suppress transcriptional pausing in transcripts derived from the HIV-1 LTR and blocks premature release of HIV-1 transcripts at terminator sequences (PubMed:11112772, PubMed:14701750).</text>
</comment>
<comment type="subunit">
    <text evidence="3 4 5 6 7 8 13 15 16 17 18 20 27 28 29 34 36">Interacts with SUPT4H1 to form DSIF. DSIF interacts with the positive transcription elongation factor b complex (P-TEFb complex), which is composed of CDK9 and cyclin-T (CCNT1 or CCNT2). DSIF interacts with RNA polymerase II (Pol II); forms DNA and RNA clamps that stabilize Pol II elongation complex while maintaining the nontemplate DNA strand in the transcription bubble and nascent RNA in the exit channel. This interaction is reduced by phosphorylation of the C-terminal domain (CTD) of POLR2A by P-TEFb. DSIF also interacts with the NELF complex, which is composed of NELFA, NELFB, NELFD and NELFE, and this interaction occurs following prior binding of DSIF to RNA polymerase II. DSIF also interacts with PRMT1/HRMT1L2, HTATSF1/TATSF1, RNGTT/CAP1A, PRMT5/SKB1, SUPT6H, and can interact with PIN1. Component of a complex which is at least composed of HTATSF1/Tat-SF1, the P-TEFb complex components CDK9 and CCNT1, RNA polymerase II, SUPT5H, and NCL/nucleolin. Interacts with MCM3AP isoform GANP (PubMed:23652018).</text>
</comment>
<comment type="interaction">
    <interactant intactId="EBI-710464">
        <id>O00267</id>
    </interactant>
    <interactant intactId="EBI-1245958">
        <id>P50613</id>
        <label>CDK7</label>
    </interactant>
    <organismsDiffer>false</organismsDiffer>
    <experiments>3</experiments>
</comment>
<comment type="interaction">
    <interactant intactId="EBI-710464">
        <id>O00267</id>
    </interactant>
    <interactant intactId="EBI-714158">
        <id>Q13526</id>
        <label>PIN1</label>
    </interactant>
    <organismsDiffer>false</organismsDiffer>
    <experiments>4</experiments>
</comment>
<comment type="interaction">
    <interactant intactId="EBI-710464">
        <id>O00267</id>
    </interactant>
    <interactant intactId="EBI-295301">
        <id>P24928</id>
        <label>POLR2A</label>
    </interactant>
    <organismsDiffer>false</organismsDiffer>
    <experiments>6</experiments>
</comment>
<comment type="interaction">
    <interactant intactId="EBI-710464">
        <id>O00267</id>
    </interactant>
    <interactant intactId="EBI-437708">
        <id>P62937</id>
        <label>PPIA</label>
    </interactant>
    <organismsDiffer>false</organismsDiffer>
    <experiments>2</experiments>
</comment>
<comment type="interaction">
    <interactant intactId="EBI-710464">
        <id>O00267</id>
    </interactant>
    <interactant intactId="EBI-727250">
        <id>P63272</id>
        <label>SUPT4H1</label>
    </interactant>
    <organismsDiffer>false</organismsDiffer>
    <experiments>16</experiments>
</comment>
<comment type="interaction">
    <interactant intactId="EBI-710464">
        <id>O00267</id>
    </interactant>
    <interactant intactId="EBI-710997">
        <id>P54274</id>
        <label>TERF1</label>
    </interactant>
    <organismsDiffer>false</organismsDiffer>
    <experiments>2</experiments>
</comment>
<comment type="interaction">
    <interactant intactId="EBI-710464">
        <id>O00267</id>
    </interactant>
    <interactant intactId="EBI-25772799">
        <id>Q5EP34</id>
        <label>PA</label>
    </interactant>
    <organismsDiffer>true</organismsDiffer>
    <experiments>3</experiments>
</comment>
<comment type="interaction">
    <interactant intactId="EBI-710464">
        <id>O00267</id>
    </interactant>
    <interactant intactId="EBI-6551200">
        <id>G3MZY8</id>
        <label>POLR2A</label>
    </interactant>
    <organismsDiffer>true</organismsDiffer>
    <experiments>2</experiments>
</comment>
<comment type="interaction">
    <interactant intactId="EBI-710464">
        <id>O00267</id>
    </interactant>
    <interactant intactId="EBI-15586776">
        <id>A5PJW8</id>
        <label>POLR2B</label>
    </interactant>
    <organismsDiffer>true</organismsDiffer>
    <experiments>5</experiments>
</comment>
<comment type="subcellular location">
    <subcellularLocation>
        <location evidence="3">Nucleus</location>
    </subcellularLocation>
</comment>
<comment type="alternative products">
    <event type="alternative splicing"/>
    <isoform>
        <id>O00267-1</id>
        <name>1</name>
        <sequence type="displayed"/>
    </isoform>
    <isoform>
        <id>O00267-2</id>
        <name>2</name>
        <sequence type="described" ref="VSP_016282"/>
    </isoform>
</comment>
<comment type="tissue specificity">
    <text evidence="3 32">Ubiquitously expressed.</text>
</comment>
<comment type="PTM">
    <text evidence="18">Methylated by PRMT1/HRMT1L2 and PRMT5/SKB1. Methylation negatively regulates interaction with P-TEFb and RNA polymerase II.</text>
</comment>
<comment type="PTM">
    <text evidence="8 10 11 13 14 23 25 30 33">Phosphorylated by CDK7 and CDK9 (PubMed:10757782, PubMed:11112772, PubMed:11145967, PubMed:11809800, PubMed:15564463, PubMed:16327805). Phosphorylation by P-TEFb (CDK9) at Thr residues of the C-terminal repeats alleviates transcriptional pausing and promotes transcription elongation (PubMed:11112772, PubMed:11145967, PubMed:11809800, PubMed:15564463). Dephosphorylated by the INTAC complex when transcripts are unfavorably configured for transcriptional elongation, leading to premature transcription termination: dephosphorylation is mediated by the PPP2CA component of the INTAC complex (PubMed:34004147). Dephosphorylated by the PNUTS-PP1 complex in termination zones downstream of poly(A) sites, thereby promoting deceleration of RNA polymerase II transcription (PubMed:34004147). Phosphorylation may also stimulate interaction with PIN1 (PubMed:11575923). Bulk phosphorylation occurs predominantly in mitosis (PubMed:9199507). Phosphorylation by P-TEFb can stimulate transcriptional elongation from the HIV-1 LTR (PubMed:11112772, PubMed:11145967, PubMed:11809800, PubMed:15564463). P-TEFb dependent phosphorylation is stimulated by the HIV-1 Tat protein (PubMed:11112772).</text>
</comment>
<comment type="PTM">
    <text evidence="31">Ubiquitinated by UBR5 when not assembled in the DSIF complex, leading to its degradation: UBR5 recognizes and binds a degron that is not accessible when SUPT5H is part of the DSIF complex.</text>
</comment>
<comment type="similarity">
    <text evidence="38">Belongs to the SPT5 family.</text>
</comment>
<comment type="sequence caution" evidence="38">
    <conflict type="erroneous initiation">
        <sequence resource="EMBL-CDS" id="BAD92494"/>
    </conflict>
</comment>
<protein>
    <recommendedName>
        <fullName>Transcription elongation factor SPT5</fullName>
        <shortName>hSPT5</shortName>
    </recommendedName>
    <alternativeName>
        <fullName>DRB sensitivity-inducing factor 160 kDa subunit</fullName>
        <shortName>DSIF p160</shortName>
    </alternativeName>
    <alternativeName>
        <fullName>DRB sensitivity-inducing factor large subunit</fullName>
        <shortName>DSIF large subunit</shortName>
    </alternativeName>
    <alternativeName>
        <fullName>Tat-cotransactivator 1 protein</fullName>
        <shortName>Tat-CT1 protein</shortName>
    </alternativeName>
</protein>
<dbReference type="EMBL" id="U56402">
    <property type="protein sequence ID" value="AAC51102.1"/>
    <property type="molecule type" value="mRNA"/>
</dbReference>
<dbReference type="EMBL" id="Y12790">
    <property type="protein sequence ID" value="CAA73326.1"/>
    <property type="molecule type" value="mRNA"/>
</dbReference>
<dbReference type="EMBL" id="AB000516">
    <property type="protein sequence ID" value="BAA24075.1"/>
    <property type="molecule type" value="mRNA"/>
</dbReference>
<dbReference type="EMBL" id="AF040253">
    <property type="protein sequence ID" value="AAD02179.1"/>
    <property type="molecule type" value="mRNA"/>
</dbReference>
<dbReference type="EMBL" id="AB209257">
    <property type="protein sequence ID" value="BAD92494.1"/>
    <property type="status" value="ALT_INIT"/>
    <property type="molecule type" value="mRNA"/>
</dbReference>
<dbReference type="EMBL" id="BC024203">
    <property type="protein sequence ID" value="AAH24203.1"/>
    <property type="molecule type" value="mRNA"/>
</dbReference>
<dbReference type="CCDS" id="CCDS12536.1">
    <molecule id="O00267-1"/>
</dbReference>
<dbReference type="CCDS" id="CCDS46072.1">
    <molecule id="O00267-2"/>
</dbReference>
<dbReference type="RefSeq" id="NP_001104490.1">
    <molecule id="O00267-1"/>
    <property type="nucleotide sequence ID" value="NM_001111020.3"/>
</dbReference>
<dbReference type="RefSeq" id="NP_001124296.1">
    <molecule id="O00267-1"/>
    <property type="nucleotide sequence ID" value="NM_001130824.2"/>
</dbReference>
<dbReference type="RefSeq" id="NP_001124297.1">
    <molecule id="O00267-2"/>
    <property type="nucleotide sequence ID" value="NM_001130825.2"/>
</dbReference>
<dbReference type="RefSeq" id="NP_001306919.1">
    <molecule id="O00267-1"/>
    <property type="nucleotide sequence ID" value="NM_001319990.2"/>
</dbReference>
<dbReference type="RefSeq" id="NP_001306920.1">
    <molecule id="O00267-2"/>
    <property type="nucleotide sequence ID" value="NM_001319991.2"/>
</dbReference>
<dbReference type="RefSeq" id="NP_003160.2">
    <molecule id="O00267-1"/>
    <property type="nucleotide sequence ID" value="NM_003169.3"/>
</dbReference>
<dbReference type="PDB" id="2DO3">
    <property type="method" value="NMR"/>
    <property type="chains" value="A=462-523"/>
</dbReference>
<dbReference type="PDB" id="2E6Z">
    <property type="method" value="NMR"/>
    <property type="chains" value="A=420-471"/>
</dbReference>
<dbReference type="PDB" id="2E70">
    <property type="method" value="NMR"/>
    <property type="chains" value="A=694-757"/>
</dbReference>
<dbReference type="PDB" id="3H7H">
    <property type="method" value="X-ray"/>
    <property type="resolution" value="1.55 A"/>
    <property type="chains" value="B=176-273"/>
</dbReference>
<dbReference type="PDB" id="4L1U">
    <property type="method" value="X-ray"/>
    <property type="resolution" value="2.42 A"/>
    <property type="chains" value="G/H/I/J=778-790"/>
</dbReference>
<dbReference type="PDB" id="5OHO">
    <property type="method" value="X-ray"/>
    <property type="resolution" value="1.60 A"/>
    <property type="chains" value="A/B=536-646"/>
</dbReference>
<dbReference type="PDB" id="5OHQ">
    <property type="method" value="X-ray"/>
    <property type="resolution" value="1.10 A"/>
    <property type="chains" value="A=979-1087"/>
</dbReference>
<dbReference type="PDB" id="5OIK">
    <property type="method" value="EM"/>
    <property type="resolution" value="3.70 A"/>
    <property type="chains" value="Z=1-1087"/>
</dbReference>
<dbReference type="PDB" id="5U98">
    <property type="method" value="X-ray"/>
    <property type="resolution" value="2.00 A"/>
    <property type="chains" value="C/F=980-988"/>
</dbReference>
<dbReference type="PDB" id="6EQY">
    <property type="method" value="NMR"/>
    <property type="chains" value="A=522-647"/>
</dbReference>
<dbReference type="PDB" id="6ER0">
    <property type="method" value="NMR"/>
    <property type="chains" value="A=961-1087"/>
</dbReference>
<dbReference type="PDB" id="6GMH">
    <property type="method" value="EM"/>
    <property type="resolution" value="3.10 A"/>
    <property type="chains" value="Z=1-1087"/>
</dbReference>
<dbReference type="PDB" id="6GML">
    <property type="method" value="EM"/>
    <property type="resolution" value="3.20 A"/>
    <property type="chains" value="Z=1-1087"/>
</dbReference>
<dbReference type="PDB" id="6TED">
    <property type="method" value="EM"/>
    <property type="resolution" value="3.10 A"/>
    <property type="chains" value="Z=1-1087"/>
</dbReference>
<dbReference type="PDB" id="7OKX">
    <property type="method" value="EM"/>
    <property type="resolution" value="3.30 A"/>
    <property type="chains" value="Z=1-1087"/>
</dbReference>
<dbReference type="PDB" id="7OKY">
    <property type="method" value="EM"/>
    <property type="resolution" value="4.14 A"/>
    <property type="chains" value="Z=1-1087"/>
</dbReference>
<dbReference type="PDB" id="7OL0">
    <property type="method" value="EM"/>
    <property type="resolution" value="3.00 A"/>
    <property type="chains" value="Z=1-1087"/>
</dbReference>
<dbReference type="PDB" id="7PKS">
    <property type="method" value="EM"/>
    <property type="resolution" value="3.60 A"/>
    <property type="chains" value="Z=1-1087"/>
</dbReference>
<dbReference type="PDB" id="7UNC">
    <property type="method" value="EM"/>
    <property type="resolution" value="3.00 A"/>
    <property type="chains" value="Z=1-1087"/>
</dbReference>
<dbReference type="PDB" id="7UND">
    <property type="method" value="EM"/>
    <property type="resolution" value="3.00 A"/>
    <property type="chains" value="Z=1-1087"/>
</dbReference>
<dbReference type="PDB" id="7YCX">
    <property type="method" value="EM"/>
    <property type="resolution" value="4.18 A"/>
    <property type="chains" value="j=1-1087"/>
</dbReference>
<dbReference type="PDB" id="8A3Y">
    <property type="method" value="EM"/>
    <property type="resolution" value="3.30 A"/>
    <property type="chains" value="Z=1-1087"/>
</dbReference>
<dbReference type="PDB" id="8P4C">
    <property type="method" value="EM"/>
    <property type="resolution" value="3.80 A"/>
    <property type="chains" value="Z=1-1087"/>
</dbReference>
<dbReference type="PDB" id="8P4D">
    <property type="method" value="EM"/>
    <property type="resolution" value="3.60 A"/>
    <property type="chains" value="Z=1-1087"/>
</dbReference>
<dbReference type="PDB" id="8P4E">
    <property type="method" value="EM"/>
    <property type="resolution" value="3.90 A"/>
    <property type="chains" value="Z=1-1087"/>
</dbReference>
<dbReference type="PDB" id="8P4F">
    <property type="method" value="EM"/>
    <property type="resolution" value="4.00 A"/>
    <property type="chains" value="Z=1-1087"/>
</dbReference>
<dbReference type="PDB" id="8RBX">
    <property type="method" value="EM"/>
    <property type="resolution" value="4.10 A"/>
    <property type="chains" value="Z=1-1087"/>
</dbReference>
<dbReference type="PDB" id="8UHA">
    <property type="method" value="EM"/>
    <property type="resolution" value="3.50 A"/>
    <property type="chains" value="Z=1-1087"/>
</dbReference>
<dbReference type="PDB" id="8UHD">
    <property type="method" value="EM"/>
    <property type="resolution" value="2.80 A"/>
    <property type="chains" value="Z=1-1087"/>
</dbReference>
<dbReference type="PDB" id="8UHG">
    <property type="method" value="EM"/>
    <property type="resolution" value="2.70 A"/>
    <property type="chains" value="Z=1-1087"/>
</dbReference>
<dbReference type="PDB" id="8UI0">
    <property type="method" value="EM"/>
    <property type="resolution" value="2.70 A"/>
    <property type="chains" value="Z=1-1087"/>
</dbReference>
<dbReference type="PDB" id="8UIS">
    <property type="method" value="EM"/>
    <property type="resolution" value="3.23 A"/>
    <property type="chains" value="Z=1-1087"/>
</dbReference>
<dbReference type="PDB" id="8W8E">
    <property type="method" value="EM"/>
    <property type="resolution" value="3.90 A"/>
    <property type="chains" value="Z=1-1087"/>
</dbReference>
<dbReference type="PDB" id="8W8F">
    <property type="method" value="EM"/>
    <property type="resolution" value="4.00 A"/>
    <property type="chains" value="Z=1-1087"/>
</dbReference>
<dbReference type="PDB" id="9EGX">
    <property type="method" value="EM"/>
    <property type="resolution" value="2.90 A"/>
    <property type="chains" value="Z=1-1087"/>
</dbReference>
<dbReference type="PDB" id="9EGY">
    <property type="method" value="EM"/>
    <property type="resolution" value="2.90 A"/>
    <property type="chains" value="Z=1-1087"/>
</dbReference>
<dbReference type="PDB" id="9EGZ">
    <property type="method" value="EM"/>
    <property type="resolution" value="2.90 A"/>
    <property type="chains" value="Z=1-1087"/>
</dbReference>
<dbReference type="PDB" id="9EH0">
    <property type="method" value="EM"/>
    <property type="resolution" value="3.60 A"/>
    <property type="chains" value="Z=1-1087"/>
</dbReference>
<dbReference type="PDB" id="9EH2">
    <property type="method" value="EM"/>
    <property type="resolution" value="3.10 A"/>
    <property type="chains" value="Z=1-1087"/>
</dbReference>
<dbReference type="PDB" id="9J0N">
    <property type="method" value="EM"/>
    <property type="resolution" value="3.40 A"/>
    <property type="chains" value="Z=1-1087"/>
</dbReference>
<dbReference type="PDB" id="9J0O">
    <property type="method" value="EM"/>
    <property type="resolution" value="3.30 A"/>
    <property type="chains" value="Z=1-1087"/>
</dbReference>
<dbReference type="PDB" id="9J0P">
    <property type="method" value="EM"/>
    <property type="resolution" value="3.30 A"/>
    <property type="chains" value="Z=1-1087"/>
</dbReference>
<dbReference type="PDBsum" id="2DO3"/>
<dbReference type="PDBsum" id="2E6Z"/>
<dbReference type="PDBsum" id="2E70"/>
<dbReference type="PDBsum" id="3H7H"/>
<dbReference type="PDBsum" id="4L1U"/>
<dbReference type="PDBsum" id="5OHO"/>
<dbReference type="PDBsum" id="5OHQ"/>
<dbReference type="PDBsum" id="5OIK"/>
<dbReference type="PDBsum" id="5U98"/>
<dbReference type="PDBsum" id="6EQY"/>
<dbReference type="PDBsum" id="6ER0"/>
<dbReference type="PDBsum" id="6GMH"/>
<dbReference type="PDBsum" id="6GML"/>
<dbReference type="PDBsum" id="6TED"/>
<dbReference type="PDBsum" id="7OKX"/>
<dbReference type="PDBsum" id="7OKY"/>
<dbReference type="PDBsum" id="7OL0"/>
<dbReference type="PDBsum" id="7PKS"/>
<dbReference type="PDBsum" id="7UNC"/>
<dbReference type="PDBsum" id="7UND"/>
<dbReference type="PDBsum" id="7YCX"/>
<dbReference type="PDBsum" id="8A3Y"/>
<dbReference type="PDBsum" id="8P4C"/>
<dbReference type="PDBsum" id="8P4D"/>
<dbReference type="PDBsum" id="8P4E"/>
<dbReference type="PDBsum" id="8P4F"/>
<dbReference type="PDBsum" id="8RBX"/>
<dbReference type="PDBsum" id="8UHA"/>
<dbReference type="PDBsum" id="8UHD"/>
<dbReference type="PDBsum" id="8UHG"/>
<dbReference type="PDBsum" id="8UI0"/>
<dbReference type="PDBsum" id="8UIS"/>
<dbReference type="PDBsum" id="8W8E"/>
<dbReference type="PDBsum" id="8W8F"/>
<dbReference type="PDBsum" id="9EGX"/>
<dbReference type="PDBsum" id="9EGY"/>
<dbReference type="PDBsum" id="9EGZ"/>
<dbReference type="PDBsum" id="9EH0"/>
<dbReference type="PDBsum" id="9EH2"/>
<dbReference type="PDBsum" id="9J0N"/>
<dbReference type="PDBsum" id="9J0O"/>
<dbReference type="PDBsum" id="9J0P"/>
<dbReference type="EMDB" id="EMD-0031"/>
<dbReference type="EMDB" id="EMD-0038"/>
<dbReference type="EMDB" id="EMD-10480"/>
<dbReference type="EMDB" id="EMD-12966"/>
<dbReference type="EMDB" id="EMD-12967"/>
<dbReference type="EMDB" id="EMD-12968"/>
<dbReference type="EMDB" id="EMD-12969"/>
<dbReference type="EMDB" id="EMD-12970"/>
<dbReference type="EMDB" id="EMD-12971"/>
<dbReference type="EMDB" id="EMD-12972"/>
<dbReference type="EMDB" id="EMD-12973"/>
<dbReference type="EMDB" id="EMD-12974"/>
<dbReference type="EMDB" id="EMD-13479"/>
<dbReference type="EMDB" id="EMD-15127"/>
<dbReference type="EMDB" id="EMD-17405"/>
<dbReference type="EMDB" id="EMD-17406"/>
<dbReference type="EMDB" id="EMD-17407"/>
<dbReference type="EMDB" id="EMD-17408"/>
<dbReference type="EMDB" id="EMD-19038"/>
<dbReference type="EMDB" id="EMD-26620"/>
<dbReference type="EMDB" id="EMD-26621"/>
<dbReference type="EMDB" id="EMD-33741"/>
<dbReference type="EMDB" id="EMD-37352"/>
<dbReference type="EMDB" id="EMD-37353"/>
<dbReference type="EMDB" id="EMD-3817"/>
<dbReference type="EMDB" id="EMD-42267"/>
<dbReference type="EMDB" id="EMD-42270"/>
<dbReference type="EMDB" id="EMD-42280"/>
<dbReference type="EMDB" id="EMD-42285"/>
<dbReference type="EMDB" id="EMD-42303"/>
<dbReference type="EMDB" id="EMD-42304"/>
<dbReference type="EMDB" id="EMD-48039"/>
<dbReference type="EMDB" id="EMD-48040"/>
<dbReference type="EMDB" id="EMD-48041"/>
<dbReference type="EMDB" id="EMD-48042"/>
<dbReference type="EMDB" id="EMD-48043"/>
<dbReference type="EMDB" id="EMD-48044"/>
<dbReference type="EMDB" id="EMD-61058"/>
<dbReference type="EMDB" id="EMD-61059"/>
<dbReference type="EMDB" id="EMD-61060"/>
<dbReference type="SMR" id="O00267"/>
<dbReference type="BioGRID" id="112697">
    <property type="interactions" value="407"/>
</dbReference>
<dbReference type="ComplexPortal" id="CPX-891">
    <property type="entry name" value="DSIF transcription elongation factor complex"/>
</dbReference>
<dbReference type="CORUM" id="O00267"/>
<dbReference type="DIP" id="DIP-29014N"/>
<dbReference type="FunCoup" id="O00267">
    <property type="interactions" value="4417"/>
</dbReference>
<dbReference type="IntAct" id="O00267">
    <property type="interactions" value="229"/>
</dbReference>
<dbReference type="MINT" id="O00267"/>
<dbReference type="STRING" id="9606.ENSP00000470252"/>
<dbReference type="GlyCosmos" id="O00267">
    <property type="glycosylation" value="2 sites, 1 glycan"/>
</dbReference>
<dbReference type="GlyGen" id="O00267">
    <property type="glycosylation" value="8 sites, 2 O-linked glycans (5 sites)"/>
</dbReference>
<dbReference type="iPTMnet" id="O00267"/>
<dbReference type="MetOSite" id="O00267"/>
<dbReference type="PhosphoSitePlus" id="O00267"/>
<dbReference type="SwissPalm" id="O00267"/>
<dbReference type="BioMuta" id="SUPT5H"/>
<dbReference type="jPOST" id="O00267"/>
<dbReference type="MassIVE" id="O00267"/>
<dbReference type="PaxDb" id="9606-ENSP00000470252"/>
<dbReference type="PeptideAtlas" id="O00267"/>
<dbReference type="ProteomicsDB" id="47816">
    <molecule id="O00267-1"/>
</dbReference>
<dbReference type="ProteomicsDB" id="47817">
    <molecule id="O00267-2"/>
</dbReference>
<dbReference type="Pumba" id="O00267"/>
<dbReference type="Antibodypedia" id="16797">
    <property type="antibodies" value="203 antibodies from 30 providers"/>
</dbReference>
<dbReference type="DNASU" id="6829"/>
<dbReference type="Ensembl" id="ENST00000359191.10">
    <molecule id="O00267-2"/>
    <property type="protein sequence ID" value="ENSP00000352117.6"/>
    <property type="gene ID" value="ENSG00000196235.14"/>
</dbReference>
<dbReference type="Ensembl" id="ENST00000402194.6">
    <molecule id="O00267-2"/>
    <property type="protein sequence ID" value="ENSP00000384505.2"/>
    <property type="gene ID" value="ENSG00000196235.14"/>
</dbReference>
<dbReference type="Ensembl" id="ENST00000432763.7">
    <molecule id="O00267-1"/>
    <property type="protein sequence ID" value="ENSP00000404029.4"/>
    <property type="gene ID" value="ENSG00000196235.14"/>
</dbReference>
<dbReference type="Ensembl" id="ENST00000598725.5">
    <molecule id="O00267-1"/>
    <property type="protein sequence ID" value="ENSP00000469090.1"/>
    <property type="gene ID" value="ENSG00000196235.14"/>
</dbReference>
<dbReference type="Ensembl" id="ENST00000599117.5">
    <molecule id="O00267-1"/>
    <property type="protein sequence ID" value="ENSP00000470252.1"/>
    <property type="gene ID" value="ENSG00000196235.14"/>
</dbReference>
<dbReference type="GeneID" id="6829"/>
<dbReference type="KEGG" id="hsa:6829"/>
<dbReference type="MANE-Select" id="ENST00000432763.7">
    <property type="protein sequence ID" value="ENSP00000404029.4"/>
    <property type="RefSeq nucleotide sequence ID" value="NM_001111020.3"/>
    <property type="RefSeq protein sequence ID" value="NP_001104490.1"/>
</dbReference>
<dbReference type="UCSC" id="uc002olo.5">
    <molecule id="O00267-1"/>
    <property type="organism name" value="human"/>
</dbReference>
<dbReference type="AGR" id="HGNC:11469"/>
<dbReference type="CTD" id="6829"/>
<dbReference type="DisGeNET" id="6829"/>
<dbReference type="GeneCards" id="SUPT5H"/>
<dbReference type="HGNC" id="HGNC:11469">
    <property type="gene designation" value="SUPT5H"/>
</dbReference>
<dbReference type="HPA" id="ENSG00000196235">
    <property type="expression patterns" value="Low tissue specificity"/>
</dbReference>
<dbReference type="MIM" id="602102">
    <property type="type" value="gene"/>
</dbReference>
<dbReference type="neXtProt" id="NX_O00267"/>
<dbReference type="OpenTargets" id="ENSG00000196235"/>
<dbReference type="PharmGKB" id="PA36255"/>
<dbReference type="VEuPathDB" id="HostDB:ENSG00000196235"/>
<dbReference type="eggNOG" id="KOG1999">
    <property type="taxonomic scope" value="Eukaryota"/>
</dbReference>
<dbReference type="GeneTree" id="ENSGT00440000037640"/>
<dbReference type="HOGENOM" id="CLU_003537_0_0_1"/>
<dbReference type="InParanoid" id="O00267"/>
<dbReference type="OMA" id="YPVGYMN"/>
<dbReference type="OrthoDB" id="28901at2759"/>
<dbReference type="PAN-GO" id="O00267">
    <property type="GO annotations" value="4 GO annotations based on evolutionary models"/>
</dbReference>
<dbReference type="PhylomeDB" id="O00267"/>
<dbReference type="TreeFam" id="TF105730"/>
<dbReference type="BioCyc" id="MetaCyc:G66-31601-MONOMER"/>
<dbReference type="PathwayCommons" id="O00267"/>
<dbReference type="Reactome" id="R-HSA-112382">
    <property type="pathway name" value="Formation of RNA Pol II elongation complex"/>
</dbReference>
<dbReference type="Reactome" id="R-HSA-113418">
    <property type="pathway name" value="Formation of the Early Elongation Complex"/>
</dbReference>
<dbReference type="Reactome" id="R-HSA-167152">
    <property type="pathway name" value="Formation of HIV elongation complex in the absence of HIV Tat"/>
</dbReference>
<dbReference type="Reactome" id="R-HSA-167158">
    <property type="pathway name" value="Formation of the HIV-1 Early Elongation Complex"/>
</dbReference>
<dbReference type="Reactome" id="R-HSA-167160">
    <property type="pathway name" value="RNA Pol II CTD phosphorylation and interaction with CE during HIV infection"/>
</dbReference>
<dbReference type="Reactome" id="R-HSA-167200">
    <property type="pathway name" value="Formation of HIV-1 elongation complex containing HIV-1 Tat"/>
</dbReference>
<dbReference type="Reactome" id="R-HSA-167238">
    <property type="pathway name" value="Pausing and recovery of Tat-mediated HIV elongation"/>
</dbReference>
<dbReference type="Reactome" id="R-HSA-167242">
    <property type="pathway name" value="Abortive elongation of HIV-1 transcript in the absence of Tat"/>
</dbReference>
<dbReference type="Reactome" id="R-HSA-167243">
    <property type="pathway name" value="Tat-mediated HIV elongation arrest and recovery"/>
</dbReference>
<dbReference type="Reactome" id="R-HSA-167246">
    <property type="pathway name" value="Tat-mediated elongation of the HIV-1 transcript"/>
</dbReference>
<dbReference type="Reactome" id="R-HSA-167287">
    <property type="pathway name" value="HIV elongation arrest and recovery"/>
</dbReference>
<dbReference type="Reactome" id="R-HSA-167290">
    <property type="pathway name" value="Pausing and recovery of HIV elongation"/>
</dbReference>
<dbReference type="Reactome" id="R-HSA-674695">
    <property type="pathway name" value="RNA Polymerase II Pre-transcription Events"/>
</dbReference>
<dbReference type="Reactome" id="R-HSA-6796648">
    <property type="pathway name" value="TP53 Regulates Transcription of DNA Repair Genes"/>
</dbReference>
<dbReference type="Reactome" id="R-HSA-6807505">
    <property type="pathway name" value="RNA polymerase II transcribes snRNA genes"/>
</dbReference>
<dbReference type="Reactome" id="R-HSA-72086">
    <property type="pathway name" value="mRNA Capping"/>
</dbReference>
<dbReference type="Reactome" id="R-HSA-75955">
    <property type="pathway name" value="RNA Polymerase II Transcription Elongation"/>
</dbReference>
<dbReference type="Reactome" id="R-HSA-77075">
    <property type="pathway name" value="RNA Pol II CTD phosphorylation and interaction with CE"/>
</dbReference>
<dbReference type="SignaLink" id="O00267"/>
<dbReference type="SIGNOR" id="O00267"/>
<dbReference type="BioGRID-ORCS" id="6829">
    <property type="hits" value="763 hits in 1157 CRISPR screens"/>
</dbReference>
<dbReference type="ChiTaRS" id="SUPT5H">
    <property type="organism name" value="human"/>
</dbReference>
<dbReference type="EvolutionaryTrace" id="O00267"/>
<dbReference type="GeneWiki" id="SUPT5H"/>
<dbReference type="GenomeRNAi" id="6829"/>
<dbReference type="Pharos" id="O00267">
    <property type="development level" value="Tbio"/>
</dbReference>
<dbReference type="PRO" id="PR:O00267"/>
<dbReference type="Proteomes" id="UP000005640">
    <property type="component" value="Chromosome 19"/>
</dbReference>
<dbReference type="RNAct" id="O00267">
    <property type="molecule type" value="protein"/>
</dbReference>
<dbReference type="Bgee" id="ENSG00000196235">
    <property type="expression patterns" value="Expressed in right testis and 203 other cell types or tissues"/>
</dbReference>
<dbReference type="ExpressionAtlas" id="O00267">
    <property type="expression patterns" value="baseline and differential"/>
</dbReference>
<dbReference type="GO" id="GO:0032044">
    <property type="term" value="C:DSIF complex"/>
    <property type="evidence" value="ECO:0000314"/>
    <property type="project" value="UniProtKB"/>
</dbReference>
<dbReference type="GO" id="GO:0005654">
    <property type="term" value="C:nucleoplasm"/>
    <property type="evidence" value="ECO:0000314"/>
    <property type="project" value="HPA"/>
</dbReference>
<dbReference type="GO" id="GO:0005634">
    <property type="term" value="C:nucleus"/>
    <property type="evidence" value="ECO:0000314"/>
    <property type="project" value="UniProtKB"/>
</dbReference>
<dbReference type="GO" id="GO:0003682">
    <property type="term" value="F:chromatin binding"/>
    <property type="evidence" value="ECO:0007669"/>
    <property type="project" value="Ensembl"/>
</dbReference>
<dbReference type="GO" id="GO:0019899">
    <property type="term" value="F:enzyme binding"/>
    <property type="evidence" value="ECO:0000353"/>
    <property type="project" value="UniProtKB"/>
</dbReference>
<dbReference type="GO" id="GO:0003729">
    <property type="term" value="F:mRNA binding"/>
    <property type="evidence" value="ECO:0000318"/>
    <property type="project" value="GO_Central"/>
</dbReference>
<dbReference type="GO" id="GO:0046982">
    <property type="term" value="F:protein heterodimerization activity"/>
    <property type="evidence" value="ECO:0000353"/>
    <property type="project" value="UniProtKB"/>
</dbReference>
<dbReference type="GO" id="GO:0003723">
    <property type="term" value="F:RNA binding"/>
    <property type="evidence" value="ECO:0007005"/>
    <property type="project" value="UniProtKB"/>
</dbReference>
<dbReference type="GO" id="GO:0032785">
    <property type="term" value="P:negative regulation of DNA-templated transcription, elongation"/>
    <property type="evidence" value="ECO:0000314"/>
    <property type="project" value="UniProtKB"/>
</dbReference>
<dbReference type="GO" id="GO:0000122">
    <property type="term" value="P:negative regulation of transcription by RNA polymerase II"/>
    <property type="evidence" value="ECO:0000314"/>
    <property type="project" value="UniProtKB"/>
</dbReference>
<dbReference type="GO" id="GO:0032786">
    <property type="term" value="P:positive regulation of DNA-templated transcription, elongation"/>
    <property type="evidence" value="ECO:0000314"/>
    <property type="project" value="UniProtKB"/>
</dbReference>
<dbReference type="GO" id="GO:0016239">
    <property type="term" value="P:positive regulation of macroautophagy"/>
    <property type="evidence" value="ECO:0000315"/>
    <property type="project" value="BHF-UCL"/>
</dbReference>
<dbReference type="GO" id="GO:0045944">
    <property type="term" value="P:positive regulation of transcription by RNA polymerase II"/>
    <property type="evidence" value="ECO:0000314"/>
    <property type="project" value="UniProtKB"/>
</dbReference>
<dbReference type="GO" id="GO:0032968">
    <property type="term" value="P:positive regulation of transcription elongation by RNA polymerase II"/>
    <property type="evidence" value="ECO:0000314"/>
    <property type="project" value="UniProtKB"/>
</dbReference>
<dbReference type="GO" id="GO:0034243">
    <property type="term" value="P:regulation of transcription elongation by RNA polymerase II"/>
    <property type="evidence" value="ECO:0000314"/>
    <property type="project" value="ComplexPortal"/>
</dbReference>
<dbReference type="GO" id="GO:0006368">
    <property type="term" value="P:transcription elongation by RNA polymerase II"/>
    <property type="evidence" value="ECO:0000314"/>
    <property type="project" value="UniProtKB"/>
</dbReference>
<dbReference type="GO" id="GO:0140673">
    <property type="term" value="P:transcription elongation-coupled chromatin remodeling"/>
    <property type="evidence" value="ECO:0007669"/>
    <property type="project" value="InterPro"/>
</dbReference>
<dbReference type="CDD" id="cd06081">
    <property type="entry name" value="KOW_Spt5_1"/>
    <property type="match status" value="1"/>
</dbReference>
<dbReference type="CDD" id="cd06082">
    <property type="entry name" value="KOW_Spt5_2"/>
    <property type="match status" value="1"/>
</dbReference>
<dbReference type="CDD" id="cd06083">
    <property type="entry name" value="KOW_Spt5_3"/>
    <property type="match status" value="1"/>
</dbReference>
<dbReference type="CDD" id="cd06084">
    <property type="entry name" value="KOW_Spt5_4"/>
    <property type="match status" value="1"/>
</dbReference>
<dbReference type="CDD" id="cd06085">
    <property type="entry name" value="KOW_Spt5_5"/>
    <property type="match status" value="1"/>
</dbReference>
<dbReference type="CDD" id="cd06086">
    <property type="entry name" value="KOW_Spt5_6"/>
    <property type="match status" value="1"/>
</dbReference>
<dbReference type="CDD" id="cd09888">
    <property type="entry name" value="NGN_Euk"/>
    <property type="match status" value="1"/>
</dbReference>
<dbReference type="FunFam" id="2.30.30.30:FF:000013">
    <property type="entry name" value="Transcription elongation factor SPT5"/>
    <property type="match status" value="1"/>
</dbReference>
<dbReference type="FunFam" id="2.30.30.30:FF:000016">
    <property type="entry name" value="Transcription elongation factor SPT5"/>
    <property type="match status" value="1"/>
</dbReference>
<dbReference type="FunFam" id="2.30.30.30:FF:000017">
    <property type="entry name" value="Transcription elongation factor SPT5"/>
    <property type="match status" value="1"/>
</dbReference>
<dbReference type="FunFam" id="3.30.70.940:FF:000003">
    <property type="entry name" value="Transcription elongation factor SPT5"/>
    <property type="match status" value="1"/>
</dbReference>
<dbReference type="Gene3D" id="2.30.30.30">
    <property type="match status" value="3"/>
</dbReference>
<dbReference type="Gene3D" id="3.30.70.940">
    <property type="entry name" value="NusG, N-terminal domain"/>
    <property type="match status" value="1"/>
</dbReference>
<dbReference type="IDEAL" id="IID00641"/>
<dbReference type="InterPro" id="IPR005824">
    <property type="entry name" value="KOW"/>
</dbReference>
<dbReference type="InterPro" id="IPR041973">
    <property type="entry name" value="KOW_Spt5_1"/>
</dbReference>
<dbReference type="InterPro" id="IPR041975">
    <property type="entry name" value="KOW_Spt5_2"/>
</dbReference>
<dbReference type="InterPro" id="IPR041976">
    <property type="entry name" value="KOW_Spt5_3"/>
</dbReference>
<dbReference type="InterPro" id="IPR041977">
    <property type="entry name" value="KOW_Spt5_4"/>
</dbReference>
<dbReference type="InterPro" id="IPR041978">
    <property type="entry name" value="KOW_Spt5_5"/>
</dbReference>
<dbReference type="InterPro" id="IPR041980">
    <property type="entry name" value="KOW_Spt5_6"/>
</dbReference>
<dbReference type="InterPro" id="IPR005100">
    <property type="entry name" value="NGN-domain"/>
</dbReference>
<dbReference type="InterPro" id="IPR006645">
    <property type="entry name" value="NGN-like_dom"/>
</dbReference>
<dbReference type="InterPro" id="IPR036735">
    <property type="entry name" value="NGN_dom_sf"/>
</dbReference>
<dbReference type="InterPro" id="IPR039385">
    <property type="entry name" value="NGN_Euk"/>
</dbReference>
<dbReference type="InterPro" id="IPR014722">
    <property type="entry name" value="Rib_uL2_dom2"/>
</dbReference>
<dbReference type="InterPro" id="IPR039659">
    <property type="entry name" value="SPT5"/>
</dbReference>
<dbReference type="InterPro" id="IPR024945">
    <property type="entry name" value="Spt5_C_dom"/>
</dbReference>
<dbReference type="InterPro" id="IPR022581">
    <property type="entry name" value="Spt5_N"/>
</dbReference>
<dbReference type="InterPro" id="IPR017071">
    <property type="entry name" value="TF_Spt5_eukaryote"/>
</dbReference>
<dbReference type="InterPro" id="IPR008991">
    <property type="entry name" value="Translation_prot_SH3-like_sf"/>
</dbReference>
<dbReference type="PANTHER" id="PTHR11125">
    <property type="entry name" value="SUPPRESSOR OF TY 5"/>
    <property type="match status" value="1"/>
</dbReference>
<dbReference type="PANTHER" id="PTHR11125:SF7">
    <property type="entry name" value="TRANSCRIPTION ELONGATION FACTOR SPT5"/>
    <property type="match status" value="1"/>
</dbReference>
<dbReference type="Pfam" id="PF00467">
    <property type="entry name" value="KOW"/>
    <property type="match status" value="1"/>
</dbReference>
<dbReference type="Pfam" id="PF23042">
    <property type="entry name" value="KOW1_SPT5"/>
    <property type="match status" value="1"/>
</dbReference>
<dbReference type="Pfam" id="PF23284">
    <property type="entry name" value="KOW2_Spt5"/>
    <property type="match status" value="1"/>
</dbReference>
<dbReference type="Pfam" id="PF23291">
    <property type="entry name" value="KOW4_SPT5"/>
    <property type="match status" value="1"/>
</dbReference>
<dbReference type="Pfam" id="PF23290">
    <property type="entry name" value="KOW5_SPT5"/>
    <property type="match status" value="1"/>
</dbReference>
<dbReference type="Pfam" id="PF23288">
    <property type="entry name" value="KOW6_SPT5"/>
    <property type="match status" value="1"/>
</dbReference>
<dbReference type="Pfam" id="PF23287">
    <property type="entry name" value="KOW7_SPT5"/>
    <property type="match status" value="1"/>
</dbReference>
<dbReference type="Pfam" id="PF23037">
    <property type="entry name" value="KOWx_SPT5"/>
    <property type="match status" value="1"/>
</dbReference>
<dbReference type="Pfam" id="PF03439">
    <property type="entry name" value="Spt5-NGN"/>
    <property type="match status" value="1"/>
</dbReference>
<dbReference type="Pfam" id="PF11942">
    <property type="entry name" value="Spt5_N"/>
    <property type="match status" value="1"/>
</dbReference>
<dbReference type="PIRSF" id="PIRSF036945">
    <property type="entry name" value="Spt5"/>
    <property type="match status" value="1"/>
</dbReference>
<dbReference type="SMART" id="SM01104">
    <property type="entry name" value="CTD"/>
    <property type="match status" value="1"/>
</dbReference>
<dbReference type="SMART" id="SM00739">
    <property type="entry name" value="KOW"/>
    <property type="match status" value="6"/>
</dbReference>
<dbReference type="SMART" id="SM00738">
    <property type="entry name" value="NGN"/>
    <property type="match status" value="1"/>
</dbReference>
<dbReference type="SUPFAM" id="SSF50104">
    <property type="entry name" value="Translation proteins SH3-like domain"/>
    <property type="match status" value="1"/>
</dbReference>
<proteinExistence type="evidence at protein level"/>
<feature type="chain" id="PRO_0000208468" description="Transcription elongation factor SPT5">
    <location>
        <begin position="1"/>
        <end position="1087"/>
    </location>
</feature>
<feature type="domain" description="KOW 1">
    <location>
        <begin position="273"/>
        <end position="306"/>
    </location>
</feature>
<feature type="domain" description="KOW 2">
    <location>
        <begin position="420"/>
        <end position="451"/>
    </location>
</feature>
<feature type="domain" description="KOW 3">
    <location>
        <begin position="472"/>
        <end position="503"/>
    </location>
</feature>
<feature type="domain" description="KOW 4">
    <location>
        <begin position="594"/>
        <end position="627"/>
    </location>
</feature>
<feature type="domain" description="KOW 5">
    <location>
        <begin position="704"/>
        <end position="737"/>
    </location>
</feature>
<feature type="repeat" description="CTR1-1; approximate">
    <location>
        <begin position="754"/>
        <end position="759"/>
    </location>
</feature>
<feature type="repeat" description="CTR1-2">
    <location>
        <begin position="760"/>
        <end position="765"/>
    </location>
</feature>
<feature type="repeat" description="CTR1-3">
    <location>
        <begin position="766"/>
        <end position="771"/>
    </location>
</feature>
<feature type="repeat" description="CTR1-4">
    <location>
        <begin position="772"/>
        <end position="778"/>
    </location>
</feature>
<feature type="repeat" description="CTR1-5">
    <location>
        <begin position="781"/>
        <end position="787"/>
    </location>
</feature>
<feature type="repeat" description="CTR1-6">
    <location>
        <begin position="788"/>
        <end position="794"/>
    </location>
</feature>
<feature type="repeat" description="CTR1-7">
    <location>
        <begin position="796"/>
        <end position="802"/>
    </location>
</feature>
<feature type="repeat" description="CTR1-8">
    <location>
        <begin position="803"/>
        <end position="809"/>
    </location>
</feature>
<feature type="repeat" description="CTR1-9">
    <location>
        <begin position="811"/>
        <end position="817"/>
    </location>
</feature>
<feature type="repeat" description="CTR2-1">
    <location>
        <begin position="844"/>
        <end position="851"/>
    </location>
</feature>
<feature type="repeat" description="CTR2-2; approximate">
    <location>
        <begin position="854"/>
        <end position="862"/>
    </location>
</feature>
<feature type="repeat" description="CTR2-3; approximate">
    <location>
        <begin position="863"/>
        <end position="869"/>
    </location>
</feature>
<feature type="repeat" description="CTR2-4; half-length">
    <location>
        <begin position="881"/>
        <end position="885"/>
    </location>
</feature>
<feature type="repeat" description="CTR2-5; approximate">
    <location>
        <begin position="896"/>
        <end position="902"/>
    </location>
</feature>
<feature type="repeat" description="CTR2-6">
    <location>
        <begin position="904"/>
        <end position="911"/>
    </location>
</feature>
<feature type="repeat" description="CTR2-7; approximate">
    <location>
        <begin position="916"/>
        <end position="921"/>
    </location>
</feature>
<feature type="repeat" description="CTR2-8">
    <location>
        <begin position="924"/>
        <end position="930"/>
    </location>
</feature>
<feature type="repeat" description="CTR2-9">
    <location>
        <begin position="932"/>
        <end position="939"/>
    </location>
</feature>
<feature type="repeat" description="CTR2-10">
    <location>
        <begin position="943"/>
        <end position="950"/>
    </location>
</feature>
<feature type="region of interest" description="Disordered" evidence="2">
    <location>
        <begin position="1"/>
        <end position="92"/>
    </location>
</feature>
<feature type="region of interest" description="Interaction with SUPT4H1">
    <location>
        <begin position="176"/>
        <end position="270"/>
    </location>
</feature>
<feature type="region of interest" description="Interaction with RNA polymerase II">
    <location>
        <begin position="313"/>
        <end position="420"/>
    </location>
</feature>
<feature type="region of interest" description="Disordered" evidence="2">
    <location>
        <begin position="670"/>
        <end position="700"/>
    </location>
</feature>
<feature type="region of interest" description="Disordered" evidence="2">
    <location>
        <begin position="747"/>
        <end position="978"/>
    </location>
</feature>
<feature type="region of interest" description="9 X 7 AA approximate tandem repeats of G-S-[QR]-T-P-X-[YQ], motif CTR1">
    <location>
        <begin position="754"/>
        <end position="817"/>
    </location>
</feature>
<feature type="region of interest" description="10 X 8 AA approximate tandem repeats of P-[TS]-P-S-P-[QA]-[SG]-Y, motif CTR2">
    <location>
        <begin position="844"/>
        <end position="950"/>
    </location>
</feature>
<feature type="short sequence motif" description="UBR5-degron" evidence="31">
    <location>
        <begin position="328"/>
        <end position="334"/>
    </location>
</feature>
<feature type="compositionally biased region" description="Acidic residues" evidence="2">
    <location>
        <begin position="1"/>
        <end position="27"/>
    </location>
</feature>
<feature type="compositionally biased region" description="Acidic residues" evidence="2">
    <location>
        <begin position="38"/>
        <end position="64"/>
    </location>
</feature>
<feature type="compositionally biased region" description="Acidic residues" evidence="2">
    <location>
        <begin position="78"/>
        <end position="92"/>
    </location>
</feature>
<feature type="compositionally biased region" description="Gly residues" evidence="2">
    <location>
        <begin position="679"/>
        <end position="696"/>
    </location>
</feature>
<feature type="compositionally biased region" description="Polar residues" evidence="2">
    <location>
        <begin position="761"/>
        <end position="807"/>
    </location>
</feature>
<feature type="compositionally biased region" description="Acidic residues" evidence="2">
    <location>
        <begin position="834"/>
        <end position="844"/>
    </location>
</feature>
<feature type="compositionally biased region" description="Pro residues" evidence="2">
    <location>
        <begin position="857"/>
        <end position="866"/>
    </location>
</feature>
<feature type="compositionally biased region" description="Polar residues" evidence="2">
    <location>
        <begin position="867"/>
        <end position="890"/>
    </location>
</feature>
<feature type="compositionally biased region" description="Low complexity" evidence="2">
    <location>
        <begin position="896"/>
        <end position="911"/>
    </location>
</feature>
<feature type="binding site" evidence="29 39">
    <location>
        <position position="579"/>
    </location>
    <ligand>
        <name>RNA</name>
        <dbReference type="ChEBI" id="CHEBI:33697"/>
    </ligand>
</feature>
<feature type="binding site" evidence="29 39">
    <location>
        <position position="619"/>
    </location>
    <ligand>
        <name>DNA</name>
        <dbReference type="ChEBI" id="CHEBI:16991"/>
    </ligand>
</feature>
<feature type="modified residue" description="Phosphoserine" evidence="1">
    <location>
        <position position="32"/>
    </location>
</feature>
<feature type="modified residue" description="Phosphoserine" evidence="1">
    <location>
        <position position="36"/>
    </location>
</feature>
<feature type="modified residue" description="Phosphoserine" evidence="40 41 42 43">
    <location>
        <position position="666"/>
    </location>
</feature>
<feature type="modified residue" description="Asymmetric dimethylarginine; by PRMT1; alternate" evidence="18">
    <location>
        <position position="681"/>
    </location>
</feature>
<feature type="modified residue" description="Omega-N-methylarginine; by PRMT1; alternate" evidence="18">
    <location>
        <position position="681"/>
    </location>
</feature>
<feature type="modified residue" description="Phosphoserine" evidence="43">
    <location>
        <position position="686"/>
    </location>
</feature>
<feature type="modified residue" description="Asymmetric dimethylarginine; by PRMT1; alternate" evidence="18">
    <location>
        <position position="696"/>
    </location>
</feature>
<feature type="modified residue" description="Omega-N-methylarginine; by PRMT1; alternate" evidence="18">
    <location>
        <position position="696"/>
    </location>
</feature>
<feature type="modified residue" description="Asymmetric dimethylarginine; by PRMT1; alternate" evidence="18">
    <location>
        <position position="698"/>
    </location>
</feature>
<feature type="modified residue" description="Omega-N-methylarginine; by PRMT1 and PRMT5; alternate" evidence="18">
    <location>
        <position position="698"/>
    </location>
</feature>
<feature type="modified residue" description="Symmetric dimethylarginine; by PRMT5; alternate" evidence="18">
    <location>
        <position position="698"/>
    </location>
</feature>
<feature type="modified residue" description="N6-acetyllysine" evidence="1">
    <location>
        <position position="718"/>
    </location>
</feature>
<feature type="modified residue" description="Phosphothreonine; by CDK9" evidence="8 26">
    <location>
        <position position="775"/>
    </location>
</feature>
<feature type="modified residue" description="Phosphothreonine; by CDK9" evidence="8 26">
    <location>
        <position position="784"/>
    </location>
</feature>
<feature type="modified residue" description="Phosphoserine" evidence="43">
    <location>
        <position position="789"/>
    </location>
</feature>
<feature type="modified residue" description="Phosphothreonine; by CDK9" evidence="26 43">
    <location>
        <position position="791"/>
    </location>
</feature>
<feature type="modified residue" description="Phosphothreonine; by CDK9" evidence="26">
    <location>
        <position position="799"/>
    </location>
</feature>
<feature type="modified residue" description="Phosphoserine" evidence="43">
    <location>
        <position position="804"/>
    </location>
</feature>
<feature type="modified residue" description="Phosphothreonine; by CDK9" evidence="26 43">
    <location>
        <position position="806"/>
    </location>
</feature>
<feature type="modified residue" description="Phosphothreonine; by CDK9" evidence="26">
    <location>
        <position position="814"/>
    </location>
</feature>
<feature type="modified residue" description="Phosphothreonine" evidence="41 42 43">
    <location>
        <position position="1034"/>
    </location>
</feature>
<feature type="cross-link" description="Glycyl lysine isopeptide (Lys-Gly) (interchain with G-Cter in SUMO2)" evidence="44 45 46">
    <location>
        <position position="143"/>
    </location>
</feature>
<feature type="cross-link" description="Glycyl lysine isopeptide (Lys-Gly) (interchain with G-Cter in SUMO2)" evidence="46">
    <location>
        <position position="1037"/>
    </location>
</feature>
<feature type="splice variant" id="VSP_016282" description="In isoform 2." evidence="37">
    <location>
        <begin position="103"/>
        <end position="106"/>
    </location>
</feature>
<feature type="mutagenesis site" description="Reduces the affinity for Pol II elongation complex; when associated with A-247, A-249, A-250 and A-251." evidence="29">
    <original>R</original>
    <variation>A</variation>
    <location>
        <position position="246"/>
    </location>
</feature>
<feature type="mutagenesis site" description="Reduces the affinity for Pol II elongation complex; when associated with A-246, A-249, A-250 and A-251." evidence="29">
    <original>L</original>
    <variation>A</variation>
    <location>
        <position position="247"/>
    </location>
</feature>
<feature type="mutagenesis site" description="Reduces the affinity for Pol II elongation complex; when associated with A-246, A-247, A-250 and A-251." evidence="29">
    <original>Y</original>
    <variation>A</variation>
    <location>
        <position position="249"/>
    </location>
</feature>
<feature type="mutagenesis site" description="Reduces the affinity for Pol II elongation complex; when associated with A-246, A-247, A-249 and A-251." evidence="29">
    <original>W</original>
    <variation>A</variation>
    <location>
        <position position="250"/>
    </location>
</feature>
<feature type="mutagenesis site" description="Reduces the affinity for Pol II elongation complex; when associated with A-246, A-247, A-249 and A-250." evidence="29">
    <original>N</original>
    <variation>A</variation>
    <location>
        <position position="251"/>
    </location>
</feature>
<feature type="mutagenesis site" description="Reduces the affinity for Pol II elongation complex; when associated with A-578, A-579 and A-582." evidence="29">
    <original>R</original>
    <variation>A</variation>
    <location>
        <position position="577"/>
    </location>
</feature>
<feature type="mutagenesis site" description="Reduces the affinity for Pol II elongation complex; when associated with E-578, E-579 and E-582." evidence="29">
    <original>R</original>
    <variation>E</variation>
    <location>
        <position position="577"/>
    </location>
</feature>
<feature type="mutagenesis site" description="Reduces the affinity for Pol II elongation complex; when associated with A-577, A-579 and A-582." evidence="29">
    <original>K</original>
    <variation>A</variation>
    <location>
        <position position="578"/>
    </location>
</feature>
<feature type="mutagenesis site" description="Reduces the affinity for Pol II elongation complex; when associated with E-577, E-579 and E-582." evidence="29">
    <original>K</original>
    <variation>E</variation>
    <location>
        <position position="578"/>
    </location>
</feature>
<feature type="mutagenesis site" description="Reduces the affinity for Pol II elongation complex; when associated with A-577, A-578 and A-582." evidence="29">
    <original>K</original>
    <variation>A</variation>
    <location>
        <position position="579"/>
    </location>
</feature>
<feature type="mutagenesis site" description="Reduces the affinity for Pol II elongation complex; when associated with E-577, E-578 and E-582." evidence="29">
    <original>K</original>
    <variation>E</variation>
    <location>
        <position position="579"/>
    </location>
</feature>
<feature type="mutagenesis site" description="Reduces the affinity for Pol II elongation complex; when associated with A-577, A-578 and A-579." evidence="29">
    <original>R</original>
    <variation>A</variation>
    <location>
        <position position="582"/>
    </location>
</feature>
<feature type="mutagenesis site" description="Reduces the affinity for Pol II elongation complex; when associated with E-577, E-578 and E-579." evidence="29">
    <original>R</original>
    <variation>E</variation>
    <location>
        <position position="582"/>
    </location>
</feature>
<feature type="mutagenesis site" description="Enhances interactions with CDK9 and RNA polymerase II and enhances transcriptional elongation; when associated with A-696 and A-698." evidence="18">
    <original>R</original>
    <variation>A</variation>
    <location>
        <position position="681"/>
    </location>
</feature>
<feature type="mutagenesis site" description="Increases promoter association and enhances transcriptional elongation; when associated with K-696 and K-698." evidence="18">
    <original>R</original>
    <variation>K</variation>
    <location>
        <position position="681"/>
    </location>
</feature>
<feature type="mutagenesis site" description="Enhances interactions with CDK9 and RNA polymerase II and enhances transcriptional elongation; when associated with A-681 and A-698." evidence="18">
    <original>R</original>
    <variation>A</variation>
    <location>
        <position position="696"/>
    </location>
</feature>
<feature type="mutagenesis site" description="Increases promoter association and enhances transcriptional elongation; when associated with K-681 and K-698." evidence="18">
    <original>R</original>
    <variation>K</variation>
    <location>
        <position position="696"/>
    </location>
</feature>
<feature type="mutagenesis site" description="Enhances transcriptional elongation. Enhances interactions with CDK9 and RNA polymerase II and enhances transcriptional elongation; when associated with A-681 and A-696." evidence="18">
    <original>R</original>
    <variation>A</variation>
    <location>
        <position position="698"/>
    </location>
</feature>
<feature type="mutagenesis site" description="Increases promoter association and enhances transcriptional elongation; when associated with K-681 and K-696." evidence="18">
    <original>R</original>
    <variation>K</variation>
    <location>
        <position position="698"/>
    </location>
</feature>
<feature type="mutagenesis site" description="Decreased ability to promote transcription elongation; when associated with A-784, A-791, A-799, A-806 and A-814." evidence="26">
    <original>T</original>
    <variation>A</variation>
    <location>
        <position position="775"/>
    </location>
</feature>
<feature type="mutagenesis site" description="Decreased ability to promote transcription elongation; when associated with A-775, A-791, A-799, A-806 and A-814." evidence="26">
    <original>T</original>
    <variation>A</variation>
    <location>
        <position position="784"/>
    </location>
</feature>
<feature type="mutagenesis site" description="Decreased ability to promote transcription elongation; when associated with A-775, A-784, A-799, A-806 and A-814." evidence="26">
    <original>T</original>
    <variation>A</variation>
    <location>
        <position position="791"/>
    </location>
</feature>
<feature type="mutagenesis site" description="Decreased ability to promote transcription elongation; when associated with A-775, A-784, A-791, A-806 and A-814." evidence="26">
    <original>T</original>
    <variation>A</variation>
    <location>
        <position position="799"/>
    </location>
</feature>
<feature type="mutagenesis site" description="Decreased ability to promote transcription elongation; when associated with A-775, A-784, A-791, A-799 and A-814." evidence="26">
    <original>T</original>
    <variation>A</variation>
    <location>
        <position position="806"/>
    </location>
</feature>
<feature type="mutagenesis site" description="Decreased ability to promote transcription elongation; when associated with A-775, A-784, A-791, A-799 and A-806." evidence="26">
    <original>T</original>
    <variation>A</variation>
    <location>
        <position position="814"/>
    </location>
</feature>
<feature type="mutagenesis site" description="Defective in regulation of transcriptional elongation." evidence="22">
    <original>G</original>
    <variation>D</variation>
    <location>
        <position position="1002"/>
    </location>
</feature>
<feature type="sequence conflict" description="In Ref. 1; AAC51102." evidence="38" ref="1">
    <original>T</original>
    <variation>I</variation>
    <location>
        <position position="181"/>
    </location>
</feature>
<feature type="sequence conflict" description="In Ref. 1; AAC51102." evidence="38" ref="1">
    <original>G</original>
    <variation>A</variation>
    <location>
        <position position="483"/>
    </location>
</feature>
<feature type="sequence conflict" description="In Ref. 1; AAC51102." evidence="38" ref="1">
    <original>A</original>
    <variation>G</variation>
    <location>
        <position position="820"/>
    </location>
</feature>
<feature type="sequence conflict" description="In Ref. 3; BAA24075." evidence="38" ref="3">
    <original>P</original>
    <variation>R</variation>
    <location>
        <position position="846"/>
    </location>
</feature>
<feature type="strand" evidence="48">
    <location>
        <begin position="178"/>
        <end position="183"/>
    </location>
</feature>
<feature type="helix" evidence="48">
    <location>
        <begin position="189"/>
        <end position="203"/>
    </location>
</feature>
<feature type="strand" evidence="48">
    <location>
        <begin position="206"/>
        <end position="208"/>
    </location>
</feature>
<feature type="strand" evidence="48">
    <location>
        <begin position="214"/>
        <end position="217"/>
    </location>
</feature>
<feature type="strand" evidence="48">
    <location>
        <begin position="223"/>
        <end position="231"/>
    </location>
</feature>
<feature type="helix" evidence="48">
    <location>
        <begin position="232"/>
        <end position="239"/>
    </location>
</feature>
<feature type="helix" evidence="48">
    <location>
        <begin position="243"/>
        <end position="248"/>
    </location>
</feature>
<feature type="helix" evidence="48">
    <location>
        <begin position="257"/>
        <end position="259"/>
    </location>
</feature>
<feature type="helix" evidence="48">
    <location>
        <begin position="262"/>
        <end position="264"/>
    </location>
</feature>
<feature type="strand" evidence="52">
    <location>
        <begin position="278"/>
        <end position="284"/>
    </location>
</feature>
<feature type="turn" evidence="54">
    <location>
        <begin position="285"/>
        <end position="288"/>
    </location>
</feature>
<feature type="strand" evidence="52">
    <location>
        <begin position="290"/>
        <end position="296"/>
    </location>
</feature>
<feature type="strand" evidence="52">
    <location>
        <begin position="300"/>
        <end position="307"/>
    </location>
</feature>
<feature type="turn" evidence="52">
    <location>
        <begin position="313"/>
        <end position="315"/>
    </location>
</feature>
<feature type="helix" evidence="52">
    <location>
        <begin position="342"/>
        <end position="348"/>
    </location>
</feature>
<feature type="strand" evidence="52">
    <location>
        <begin position="350"/>
        <end position="355"/>
    </location>
</feature>
<feature type="strand" evidence="52">
    <location>
        <begin position="358"/>
        <end position="361"/>
    </location>
</feature>
<feature type="turn" evidence="52">
    <location>
        <begin position="362"/>
        <end position="364"/>
    </location>
</feature>
<feature type="strand" evidence="52">
    <location>
        <begin position="365"/>
        <end position="368"/>
    </location>
</feature>
<feature type="strand" evidence="52">
    <location>
        <begin position="371"/>
        <end position="378"/>
    </location>
</feature>
<feature type="helix" evidence="52">
    <location>
        <begin position="390"/>
        <end position="395"/>
    </location>
</feature>
<feature type="strand" evidence="55">
    <location>
        <begin position="425"/>
        <end position="428"/>
    </location>
</feature>
<feature type="turn" evidence="52">
    <location>
        <begin position="432"/>
        <end position="435"/>
    </location>
</feature>
<feature type="strand" evidence="52">
    <location>
        <begin position="437"/>
        <end position="439"/>
    </location>
</feature>
<feature type="strand" evidence="55">
    <location>
        <begin position="445"/>
        <end position="447"/>
    </location>
</feature>
<feature type="strand" evidence="47">
    <location>
        <begin position="461"/>
        <end position="464"/>
    </location>
</feature>
<feature type="turn" evidence="55">
    <location>
        <begin position="465"/>
        <end position="467"/>
    </location>
</feature>
<feature type="strand" evidence="47">
    <location>
        <begin position="468"/>
        <end position="470"/>
    </location>
</feature>
<feature type="strand" evidence="55">
    <location>
        <begin position="474"/>
        <end position="480"/>
    </location>
</feature>
<feature type="strand" evidence="53">
    <location>
        <begin position="481"/>
        <end position="483"/>
    </location>
</feature>
<feature type="turn" evidence="55">
    <location>
        <begin position="484"/>
        <end position="487"/>
    </location>
</feature>
<feature type="strand" evidence="55">
    <location>
        <begin position="489"/>
        <end position="495"/>
    </location>
</feature>
<feature type="strand" evidence="55">
    <location>
        <begin position="500"/>
        <end position="503"/>
    </location>
</feature>
<feature type="strand" evidence="55">
    <location>
        <begin position="510"/>
        <end position="513"/>
    </location>
</feature>
<feature type="helix" evidence="55">
    <location>
        <begin position="515"/>
        <end position="517"/>
    </location>
</feature>
<feature type="strand" evidence="52">
    <location>
        <begin position="518"/>
        <end position="520"/>
    </location>
</feature>
<feature type="strand" evidence="52">
    <location>
        <begin position="531"/>
        <end position="533"/>
    </location>
</feature>
<feature type="strand" evidence="49">
    <location>
        <begin position="539"/>
        <end position="541"/>
    </location>
</feature>
<feature type="strand" evidence="49">
    <location>
        <begin position="543"/>
        <end position="545"/>
    </location>
</feature>
<feature type="strand" evidence="49">
    <location>
        <begin position="547"/>
        <end position="553"/>
    </location>
</feature>
<feature type="strand" evidence="49">
    <location>
        <begin position="555"/>
        <end position="562"/>
    </location>
</feature>
<feature type="turn" evidence="51">
    <location>
        <begin position="563"/>
        <end position="565"/>
    </location>
</feature>
<feature type="strand" evidence="49">
    <location>
        <begin position="567"/>
        <end position="571"/>
    </location>
</feature>
<feature type="helix" evidence="49">
    <location>
        <begin position="572"/>
        <end position="574"/>
    </location>
</feature>
<feature type="strand" evidence="49">
    <location>
        <begin position="575"/>
        <end position="577"/>
    </location>
</feature>
<feature type="strand" evidence="49">
    <location>
        <begin position="585"/>
        <end position="587"/>
    </location>
</feature>
<feature type="turn" evidence="51">
    <location>
        <begin position="589"/>
        <end position="591"/>
    </location>
</feature>
<feature type="strand" evidence="49">
    <location>
        <begin position="593"/>
        <end position="595"/>
    </location>
</feature>
<feature type="strand" evidence="49">
    <location>
        <begin position="599"/>
        <end position="602"/>
    </location>
</feature>
<feature type="turn" evidence="49">
    <location>
        <begin position="606"/>
        <end position="609"/>
    </location>
</feature>
<feature type="strand" evidence="49">
    <location>
        <begin position="611"/>
        <end position="617"/>
    </location>
</feature>
<feature type="strand" evidence="49">
    <location>
        <begin position="619"/>
        <end position="625"/>
    </location>
</feature>
<feature type="helix" evidence="49">
    <location>
        <begin position="631"/>
        <end position="634"/>
    </location>
</feature>
<feature type="strand" evidence="49">
    <location>
        <begin position="635"/>
        <end position="639"/>
    </location>
</feature>
<feature type="helix" evidence="49">
    <location>
        <begin position="640"/>
        <end position="642"/>
    </location>
</feature>
<feature type="strand" evidence="49">
    <location>
        <begin position="643"/>
        <end position="645"/>
    </location>
</feature>
<feature type="turn" evidence="55">
    <location>
        <begin position="704"/>
        <end position="707"/>
    </location>
</feature>
<feature type="strand" evidence="55">
    <location>
        <begin position="709"/>
        <end position="712"/>
    </location>
</feature>
<feature type="turn" evidence="55">
    <location>
        <begin position="716"/>
        <end position="719"/>
    </location>
</feature>
<feature type="strand" evidence="55">
    <location>
        <begin position="721"/>
        <end position="727"/>
    </location>
</feature>
<feature type="strand" evidence="55">
    <location>
        <begin position="729"/>
        <end position="740"/>
    </location>
</feature>
<feature type="strand" evidence="55">
    <location>
        <begin position="742"/>
        <end position="746"/>
    </location>
</feature>
<feature type="helix" evidence="55">
    <location>
        <begin position="747"/>
        <end position="749"/>
    </location>
</feature>
<feature type="strand" evidence="55">
    <location>
        <begin position="750"/>
        <end position="752"/>
    </location>
</feature>
<feature type="strand" evidence="50">
    <location>
        <begin position="984"/>
        <end position="988"/>
    </location>
</feature>
<feature type="turn" evidence="50">
    <location>
        <begin position="995"/>
        <end position="999"/>
    </location>
</feature>
<feature type="strand" evidence="50">
    <location>
        <begin position="1001"/>
        <end position="1008"/>
    </location>
</feature>
<feature type="strand" evidence="50">
    <location>
        <begin position="1011"/>
        <end position="1016"/>
    </location>
</feature>
<feature type="turn" evidence="50">
    <location>
        <begin position="1017"/>
        <end position="1020"/>
    </location>
</feature>
<feature type="strand" evidence="50">
    <location>
        <begin position="1021"/>
        <end position="1026"/>
    </location>
</feature>
<feature type="helix" evidence="50">
    <location>
        <begin position="1027"/>
        <end position="1029"/>
    </location>
</feature>
<feature type="strand" evidence="50">
    <location>
        <begin position="1030"/>
        <end position="1032"/>
    </location>
</feature>
<feature type="strand" evidence="50">
    <location>
        <begin position="1040"/>
        <end position="1043"/>
    </location>
</feature>
<feature type="turn" evidence="50">
    <location>
        <begin position="1047"/>
        <end position="1050"/>
    </location>
</feature>
<feature type="strand" evidence="50">
    <location>
        <begin position="1052"/>
        <end position="1059"/>
    </location>
</feature>
<feature type="strand" evidence="50">
    <location>
        <begin position="1062"/>
        <end position="1067"/>
    </location>
</feature>
<feature type="turn" evidence="50">
    <location>
        <begin position="1068"/>
        <end position="1070"/>
    </location>
</feature>
<feature type="strand" evidence="50">
    <location>
        <begin position="1073"/>
        <end position="1077"/>
    </location>
</feature>
<feature type="helix" evidence="50">
    <location>
        <begin position="1078"/>
        <end position="1080"/>
    </location>
</feature>
<feature type="strand" evidence="50">
    <location>
        <begin position="1081"/>
        <end position="1084"/>
    </location>
</feature>
<evidence type="ECO:0000250" key="1">
    <source>
        <dbReference type="UniProtKB" id="O55201"/>
    </source>
</evidence>
<evidence type="ECO:0000256" key="2">
    <source>
        <dbReference type="SAM" id="MobiDB-lite"/>
    </source>
</evidence>
<evidence type="ECO:0000269" key="3">
    <source>
    </source>
</evidence>
<evidence type="ECO:0000269" key="4">
    <source>
    </source>
</evidence>
<evidence type="ECO:0000269" key="5">
    <source>
    </source>
</evidence>
<evidence type="ECO:0000269" key="6">
    <source>
    </source>
</evidence>
<evidence type="ECO:0000269" key="7">
    <source>
    </source>
</evidence>
<evidence type="ECO:0000269" key="8">
    <source>
    </source>
</evidence>
<evidence type="ECO:0000269" key="9">
    <source>
    </source>
</evidence>
<evidence type="ECO:0000269" key="10">
    <source>
    </source>
</evidence>
<evidence type="ECO:0000269" key="11">
    <source>
    </source>
</evidence>
<evidence type="ECO:0000269" key="12">
    <source>
    </source>
</evidence>
<evidence type="ECO:0000269" key="13">
    <source>
    </source>
</evidence>
<evidence type="ECO:0000269" key="14">
    <source>
    </source>
</evidence>
<evidence type="ECO:0000269" key="15">
    <source>
    </source>
</evidence>
<evidence type="ECO:0000269" key="16">
    <source>
    </source>
</evidence>
<evidence type="ECO:0000269" key="17">
    <source>
    </source>
</evidence>
<evidence type="ECO:0000269" key="18">
    <source>
    </source>
</evidence>
<evidence type="ECO:0000269" key="19">
    <source>
    </source>
</evidence>
<evidence type="ECO:0000269" key="20">
    <source>
    </source>
</evidence>
<evidence type="ECO:0000269" key="21">
    <source>
    </source>
</evidence>
<evidence type="ECO:0000269" key="22">
    <source>
    </source>
</evidence>
<evidence type="ECO:0000269" key="23">
    <source>
    </source>
</evidence>
<evidence type="ECO:0000269" key="24">
    <source>
    </source>
</evidence>
<evidence type="ECO:0000269" key="25">
    <source>
    </source>
</evidence>
<evidence type="ECO:0000269" key="26">
    <source>
    </source>
</evidence>
<evidence type="ECO:0000269" key="27">
    <source>
    </source>
</evidence>
<evidence type="ECO:0000269" key="28">
    <source>
    </source>
</evidence>
<evidence type="ECO:0000269" key="29">
    <source>
    </source>
</evidence>
<evidence type="ECO:0000269" key="30">
    <source>
    </source>
</evidence>
<evidence type="ECO:0000269" key="31">
    <source>
    </source>
</evidence>
<evidence type="ECO:0000269" key="32">
    <source>
    </source>
</evidence>
<evidence type="ECO:0000269" key="33">
    <source>
    </source>
</evidence>
<evidence type="ECO:0000269" key="34">
    <source>
    </source>
</evidence>
<evidence type="ECO:0000269" key="35">
    <source>
    </source>
</evidence>
<evidence type="ECO:0000269" key="36">
    <source>
    </source>
</evidence>
<evidence type="ECO:0000303" key="37">
    <source ref="5"/>
</evidence>
<evidence type="ECO:0000305" key="38"/>
<evidence type="ECO:0007744" key="39">
    <source>
        <dbReference type="PDB" id="5OIK"/>
    </source>
</evidence>
<evidence type="ECO:0007744" key="40">
    <source>
    </source>
</evidence>
<evidence type="ECO:0007744" key="41">
    <source>
    </source>
</evidence>
<evidence type="ECO:0007744" key="42">
    <source>
    </source>
</evidence>
<evidence type="ECO:0007744" key="43">
    <source>
    </source>
</evidence>
<evidence type="ECO:0007744" key="44">
    <source>
    </source>
</evidence>
<evidence type="ECO:0007744" key="45">
    <source>
    </source>
</evidence>
<evidence type="ECO:0007744" key="46">
    <source>
    </source>
</evidence>
<evidence type="ECO:0007829" key="47">
    <source>
        <dbReference type="PDB" id="2E6Z"/>
    </source>
</evidence>
<evidence type="ECO:0007829" key="48">
    <source>
        <dbReference type="PDB" id="3H7H"/>
    </source>
</evidence>
<evidence type="ECO:0007829" key="49">
    <source>
        <dbReference type="PDB" id="5OHO"/>
    </source>
</evidence>
<evidence type="ECO:0007829" key="50">
    <source>
        <dbReference type="PDB" id="5OHQ"/>
    </source>
</evidence>
<evidence type="ECO:0007829" key="51">
    <source>
        <dbReference type="PDB" id="6EQY"/>
    </source>
</evidence>
<evidence type="ECO:0007829" key="52">
    <source>
        <dbReference type="PDB" id="6GMH"/>
    </source>
</evidence>
<evidence type="ECO:0007829" key="53">
    <source>
        <dbReference type="PDB" id="6TED"/>
    </source>
</evidence>
<evidence type="ECO:0007829" key="54">
    <source>
        <dbReference type="PDB" id="8UHA"/>
    </source>
</evidence>
<evidence type="ECO:0007829" key="55">
    <source>
        <dbReference type="PDB" id="8UHG"/>
    </source>
</evidence>
<accession>O00267</accession>
<accession>O43279</accession>
<accession>Q59G52</accession>
<accession>Q99639</accession>
<gene>
    <name type="primary">SUPT5H</name>
    <name type="synonym">SPT5</name>
    <name type="synonym">SPT5H</name>
</gene>
<organism>
    <name type="scientific">Homo sapiens</name>
    <name type="common">Human</name>
    <dbReference type="NCBI Taxonomy" id="9606"/>
    <lineage>
        <taxon>Eukaryota</taxon>
        <taxon>Metazoa</taxon>
        <taxon>Chordata</taxon>
        <taxon>Craniata</taxon>
        <taxon>Vertebrata</taxon>
        <taxon>Euteleostomi</taxon>
        <taxon>Mammalia</taxon>
        <taxon>Eutheria</taxon>
        <taxon>Euarchontoglires</taxon>
        <taxon>Primates</taxon>
        <taxon>Haplorrhini</taxon>
        <taxon>Catarrhini</taxon>
        <taxon>Hominidae</taxon>
        <taxon>Homo</taxon>
    </lineage>
</organism>
<sequence length="1087" mass="121000">MSDSEDSNFSEEEDSERSSDGEEAEVDEERRSAAGSEKEEEPEDEEEEEEEEEYDEEEEEEDDDRPPKKPRHGGFILDEADVDDEYEDEDQWEDGAEDILEKEEIEASNIDNVVLDEDRSGARRLQNLWRDQREEELGEYYMKKYAKSSVGETVYGGSDELSDDITQQQLLPGVKDPNLWTVKCKIGEERATAISLMRKFIAYQFTDTPLQIKSVVAPEHVKGYIYVEAYKQTHVKQAIEGVGNLRLGYWNQQMVPIKEMTDVLKVVKEVANLKPKSWVRLKRGIYKDDIAQVDYVEPSQNTISLKMIPRIDYDRIKARMSLKDWFAKRKKFKRPPQRLFDAEKIRSLGGDVASDGDFLIFEGNRYSRKGFLFKSFAMSAVITEGVKPTLSELEKFEDQPEGIDLEVVTESTGKEREHNFQPGDNVEVCEGELINLQGKILSVDGNKITIMPKHEDLKDMLEFPAQELRKYFKMGDHVKVIAGRFEGDTGLIVRVEENFVILFSDLTMHELKVLPRDLQLCSETASGVDVGGQHEWGELVQLDPQTVGVIVRLERETFQVLNMYGKVVTVRHQAVTRKKDNRFAVALDSEQNNIHVKDIVKVIDGPHSGREGEIRHLFRSFAFLHCKKLVENGGMFVCKTRHLVLAGGSKPRDVTNFTVGGFAPMSPRISSPMHPSAGGQRGGFGSPGGGSGGMSRGRGRRDNELIGQTVRISQGPYKGYIGVVKDATESTARVELHSTCQTISVDRQRLTTVGSRRPGGMTSTYGRTPMYGSQTPMYGSGSRTPMYGSQTPLQDGSRTPHYGSQTPLHDGSRTPAQSGAWDPNNPNTPSRAEEEYEYAFDDEPTPSPQAYGGTPNPQTPGYPDPSSPQVNPQYNPQTPGTPAMYNTDQFSPYAAPSPQGSYQPSPSPQSYHQVAPSPAGYQNTHSPASYHPTPSPMAYQASPSPSPVGYSPMTPGAPSPGGYNPHTPGSGIEQNSSDWVTTDIQVKVRDTYLDTQVVGQTGVIRSVTGGMCSVYLKDSEKVVSISSEHLEPITPTKNNKVKVILGEDREATGVLLSIDGEDGIVRMDLDEQLKILNLRFLGKLLEA</sequence>
<name>SPT5H_HUMAN</name>